<evidence type="ECO:0000269" key="1">
    <source>
    </source>
</evidence>
<evidence type="ECO:0000269" key="2">
    <source>
    </source>
</evidence>
<evidence type="ECO:0000269" key="3">
    <source>
    </source>
</evidence>
<evidence type="ECO:0000269" key="4">
    <source>
    </source>
</evidence>
<evidence type="ECO:0000269" key="5">
    <source>
    </source>
</evidence>
<evidence type="ECO:0000269" key="6">
    <source>
    </source>
</evidence>
<evidence type="ECO:0000269" key="7">
    <source>
    </source>
</evidence>
<evidence type="ECO:0000269" key="8">
    <source>
    </source>
</evidence>
<evidence type="ECO:0000269" key="9">
    <source>
    </source>
</evidence>
<evidence type="ECO:0000269" key="10">
    <source>
    </source>
</evidence>
<evidence type="ECO:0000269" key="11">
    <source>
    </source>
</evidence>
<evidence type="ECO:0000269" key="12">
    <source>
    </source>
</evidence>
<evidence type="ECO:0000303" key="13">
    <source>
    </source>
</evidence>
<evidence type="ECO:0000305" key="14"/>
<evidence type="ECO:0007829" key="15">
    <source>
        <dbReference type="PDB" id="7AF8"/>
    </source>
</evidence>
<evidence type="ECO:0007829" key="16">
    <source>
        <dbReference type="PDB" id="7OE0"/>
    </source>
</evidence>
<evidence type="ECO:0007829" key="17">
    <source>
        <dbReference type="PDB" id="8CF1"/>
    </source>
</evidence>
<gene>
    <name type="primary">rpsI</name>
    <name type="ordered locus">b3230</name>
    <name type="ordered locus">JW3199</name>
</gene>
<sequence>MAENQYYGTGRRKSSAARVFIKPGNGKIVINQRSLEQYFGRETARMVVRQPLELVDMVEKLDLYITVKGGGISGQAGAIRHGITRALMEYDESLRSELRKAGFVTRDARQVERKKVGLRKARRRPQFSKR</sequence>
<proteinExistence type="evidence at protein level"/>
<protein>
    <recommendedName>
        <fullName evidence="13">Small ribosomal subunit protein uS9</fullName>
    </recommendedName>
    <alternativeName>
        <fullName>30S ribosomal protein S9</fullName>
    </alternativeName>
</protein>
<name>RS9_ECOLI</name>
<comment type="function">
    <text evidence="5">The C-terminal tail plays a role in the affinity of the 30S P site for different tRNAs. Mutations that decrease this affinity are suppressed in the 70S ribosome.</text>
</comment>
<comment type="subunit">
    <text evidence="1 2 3 4 5 6 7 8 9 10 11 12">Part of the 30S ribosomal subunit (PubMed:10094780, PubMed:1091515, PubMed:12244297, PubMed:12809609, PubMed:16272117, PubMed:27906160, PubMed:27906161, PubMed:27934701, PubMed:28077875, PubMed:7556101). Contacts 16S rRNA (PubMed:7556101). Cross-links to the P site tRNA and weakly to the A site tRNA (PubMed:15308780, PubMed:8524654).</text>
</comment>
<comment type="mass spectrometry"/>
<comment type="similarity">
    <text evidence="14">Belongs to the universal ribosomal protein uS9 family.</text>
</comment>
<keyword id="KW-0002">3D-structure</keyword>
<keyword id="KW-0903">Direct protein sequencing</keyword>
<keyword id="KW-1185">Reference proteome</keyword>
<keyword id="KW-0687">Ribonucleoprotein</keyword>
<keyword id="KW-0689">Ribosomal protein</keyword>
<keyword id="KW-0694">RNA-binding</keyword>
<keyword id="KW-0820">tRNA-binding</keyword>
<feature type="initiator methionine" description="Removed" evidence="2">
    <location>
        <position position="1"/>
    </location>
</feature>
<feature type="chain" id="PRO_0000111354" description="Small ribosomal subunit protein uS9">
    <location>
        <begin position="2"/>
        <end position="130"/>
    </location>
</feature>
<feature type="mutagenesis site" description="Cold sensitive for growth at 30 degrees Celsius. 350-fold reduced affinity of the 30S subunit P site for certain tRNAs in vitro." evidence="5">
    <location>
        <begin position="105"/>
        <end position="130"/>
    </location>
</feature>
<feature type="mutagenesis site" description="Very cold sensitive for growth at 30 degrees Celsius. Almost no P site binding of certain tRNAs in vitro." evidence="5">
    <location>
        <begin position="128"/>
        <end position="130"/>
    </location>
</feature>
<feature type="sequence conflict" description="In Ref. 4; AA sequence." evidence="14" ref="4">
    <original>D</original>
    <variation>N</variation>
    <location>
        <position position="56"/>
    </location>
</feature>
<feature type="sequence conflict" description="In Ref. 4; AA sequence." evidence="14" ref="4">
    <location>
        <position position="124"/>
    </location>
</feature>
<feature type="sequence conflict" description="In Ref. 4; AA sequence." evidence="14" ref="4">
    <original>Q</original>
    <variation>E</variation>
    <location>
        <position position="126"/>
    </location>
</feature>
<feature type="strand" evidence="17">
    <location>
        <begin position="6"/>
        <end position="12"/>
    </location>
</feature>
<feature type="strand" evidence="17">
    <location>
        <begin position="15"/>
        <end position="26"/>
    </location>
</feature>
<feature type="strand" evidence="17">
    <location>
        <begin position="28"/>
        <end position="30"/>
    </location>
</feature>
<feature type="helix" evidence="17">
    <location>
        <begin position="35"/>
        <end position="38"/>
    </location>
</feature>
<feature type="turn" evidence="16">
    <location>
        <begin position="39"/>
        <end position="41"/>
    </location>
</feature>
<feature type="helix" evidence="17">
    <location>
        <begin position="42"/>
        <end position="55"/>
    </location>
</feature>
<feature type="turn" evidence="17">
    <location>
        <begin position="58"/>
        <end position="60"/>
    </location>
</feature>
<feature type="strand" evidence="17">
    <location>
        <begin position="61"/>
        <end position="70"/>
    </location>
</feature>
<feature type="helix" evidence="17">
    <location>
        <begin position="72"/>
        <end position="90"/>
    </location>
</feature>
<feature type="helix" evidence="17">
    <location>
        <begin position="92"/>
        <end position="94"/>
    </location>
</feature>
<feature type="helix" evidence="17">
    <location>
        <begin position="95"/>
        <end position="101"/>
    </location>
</feature>
<feature type="turn" evidence="15">
    <location>
        <begin position="102"/>
        <end position="104"/>
    </location>
</feature>
<feature type="strand" evidence="17">
    <location>
        <begin position="118"/>
        <end position="122"/>
    </location>
</feature>
<dbReference type="EMBL" id="X02130">
    <property type="protein sequence ID" value="CAA26042.1"/>
    <property type="molecule type" value="Genomic_DNA"/>
</dbReference>
<dbReference type="EMBL" id="U18997">
    <property type="protein sequence ID" value="AAA58032.1"/>
    <property type="molecule type" value="Genomic_DNA"/>
</dbReference>
<dbReference type="EMBL" id="U00096">
    <property type="protein sequence ID" value="AAC76262.1"/>
    <property type="molecule type" value="Genomic_DNA"/>
</dbReference>
<dbReference type="EMBL" id="AP009048">
    <property type="protein sequence ID" value="BAE77273.1"/>
    <property type="molecule type" value="Genomic_DNA"/>
</dbReference>
<dbReference type="PIR" id="H65114">
    <property type="entry name" value="R3EC9"/>
</dbReference>
<dbReference type="RefSeq" id="NP_417697.1">
    <property type="nucleotide sequence ID" value="NC_000913.3"/>
</dbReference>
<dbReference type="RefSeq" id="WP_000829818.1">
    <property type="nucleotide sequence ID" value="NZ_STEB01000012.1"/>
</dbReference>
<dbReference type="PDB" id="2YKR">
    <property type="method" value="EM"/>
    <property type="resolution" value="9.80 A"/>
    <property type="chains" value="I=4-130"/>
</dbReference>
<dbReference type="PDB" id="3IY8">
    <property type="method" value="EM"/>
    <property type="resolution" value="14.10 A"/>
    <property type="chains" value="I=4-130"/>
</dbReference>
<dbReference type="PDB" id="3J9Y">
    <property type="method" value="EM"/>
    <property type="resolution" value="3.90 A"/>
    <property type="chains" value="i=1-130"/>
</dbReference>
<dbReference type="PDB" id="3J9Z">
    <property type="method" value="EM"/>
    <property type="resolution" value="3.60 A"/>
    <property type="chains" value="SI=2-130"/>
</dbReference>
<dbReference type="PDB" id="3JA1">
    <property type="method" value="EM"/>
    <property type="resolution" value="3.60 A"/>
    <property type="chains" value="SI=2-130"/>
</dbReference>
<dbReference type="PDB" id="3JBU">
    <property type="method" value="EM"/>
    <property type="resolution" value="3.64 A"/>
    <property type="chains" value="I=1-130"/>
</dbReference>
<dbReference type="PDB" id="3JBV">
    <property type="method" value="EM"/>
    <property type="resolution" value="3.32 A"/>
    <property type="chains" value="I=1-130"/>
</dbReference>
<dbReference type="PDB" id="3JCD">
    <property type="method" value="EM"/>
    <property type="resolution" value="3.70 A"/>
    <property type="chains" value="i=1-130"/>
</dbReference>
<dbReference type="PDB" id="3JCE">
    <property type="method" value="EM"/>
    <property type="resolution" value="3.20 A"/>
    <property type="chains" value="i=1-130"/>
</dbReference>
<dbReference type="PDB" id="3JCJ">
    <property type="method" value="EM"/>
    <property type="resolution" value="3.70 A"/>
    <property type="chains" value="o=1-130"/>
</dbReference>
<dbReference type="PDB" id="3JCN">
    <property type="method" value="EM"/>
    <property type="resolution" value="4.60 A"/>
    <property type="chains" value="j=1-130"/>
</dbReference>
<dbReference type="PDB" id="4A2I">
    <property type="method" value="EM"/>
    <property type="resolution" value="16.50 A"/>
    <property type="chains" value="I=4-130"/>
</dbReference>
<dbReference type="PDB" id="4ADV">
    <property type="method" value="EM"/>
    <property type="resolution" value="13.50 A"/>
    <property type="chains" value="I=2-130"/>
</dbReference>
<dbReference type="PDB" id="4U1U">
    <property type="method" value="X-ray"/>
    <property type="resolution" value="2.95 A"/>
    <property type="chains" value="AI/CI=4-130"/>
</dbReference>
<dbReference type="PDB" id="4U1V">
    <property type="method" value="X-ray"/>
    <property type="resolution" value="3.00 A"/>
    <property type="chains" value="AI/CI=4-130"/>
</dbReference>
<dbReference type="PDB" id="4U20">
    <property type="method" value="X-ray"/>
    <property type="resolution" value="2.90 A"/>
    <property type="chains" value="AI/CI=4-130"/>
</dbReference>
<dbReference type="PDB" id="4U24">
    <property type="method" value="X-ray"/>
    <property type="resolution" value="2.90 A"/>
    <property type="chains" value="AI/CI=4-130"/>
</dbReference>
<dbReference type="PDB" id="4U25">
    <property type="method" value="X-ray"/>
    <property type="resolution" value="2.90 A"/>
    <property type="chains" value="AI/CI=4-130"/>
</dbReference>
<dbReference type="PDB" id="4U26">
    <property type="method" value="X-ray"/>
    <property type="resolution" value="2.80 A"/>
    <property type="chains" value="AI/CI=4-130"/>
</dbReference>
<dbReference type="PDB" id="4U27">
    <property type="method" value="X-ray"/>
    <property type="resolution" value="2.80 A"/>
    <property type="chains" value="AI/CI=4-130"/>
</dbReference>
<dbReference type="PDB" id="4V47">
    <property type="method" value="EM"/>
    <property type="resolution" value="12.30 A"/>
    <property type="chains" value="BI=2-130"/>
</dbReference>
<dbReference type="PDB" id="4V48">
    <property type="method" value="EM"/>
    <property type="resolution" value="11.50 A"/>
    <property type="chains" value="BI=2-130"/>
</dbReference>
<dbReference type="PDB" id="4V4H">
    <property type="method" value="X-ray"/>
    <property type="resolution" value="3.46 A"/>
    <property type="chains" value="AI/CI=1-130"/>
</dbReference>
<dbReference type="PDB" id="4V4Q">
    <property type="method" value="X-ray"/>
    <property type="resolution" value="3.46 A"/>
    <property type="chains" value="AI/CI=2-130"/>
</dbReference>
<dbReference type="PDB" id="4V4V">
    <property type="method" value="EM"/>
    <property type="resolution" value="15.00 A"/>
    <property type="chains" value="AI=5-130"/>
</dbReference>
<dbReference type="PDB" id="4V4W">
    <property type="method" value="EM"/>
    <property type="resolution" value="15.00 A"/>
    <property type="chains" value="AI=5-130"/>
</dbReference>
<dbReference type="PDB" id="4V50">
    <property type="method" value="X-ray"/>
    <property type="resolution" value="3.22 A"/>
    <property type="chains" value="AI/CI=2-130"/>
</dbReference>
<dbReference type="PDB" id="4V52">
    <property type="method" value="X-ray"/>
    <property type="resolution" value="3.21 A"/>
    <property type="chains" value="AI/CI=2-130"/>
</dbReference>
<dbReference type="PDB" id="4V53">
    <property type="method" value="X-ray"/>
    <property type="resolution" value="3.54 A"/>
    <property type="chains" value="AI/CI=2-130"/>
</dbReference>
<dbReference type="PDB" id="4V54">
    <property type="method" value="X-ray"/>
    <property type="resolution" value="3.30 A"/>
    <property type="chains" value="AI/CI=2-130"/>
</dbReference>
<dbReference type="PDB" id="4V55">
    <property type="method" value="X-ray"/>
    <property type="resolution" value="4.00 A"/>
    <property type="chains" value="AI/CI=2-130"/>
</dbReference>
<dbReference type="PDB" id="4V56">
    <property type="method" value="X-ray"/>
    <property type="resolution" value="3.93 A"/>
    <property type="chains" value="AI/CI=2-130"/>
</dbReference>
<dbReference type="PDB" id="4V57">
    <property type="method" value="X-ray"/>
    <property type="resolution" value="3.50 A"/>
    <property type="chains" value="AI/CI=2-130"/>
</dbReference>
<dbReference type="PDB" id="4V5B">
    <property type="method" value="X-ray"/>
    <property type="resolution" value="3.74 A"/>
    <property type="chains" value="BI/DI=2-130"/>
</dbReference>
<dbReference type="PDB" id="4V5H">
    <property type="method" value="EM"/>
    <property type="resolution" value="5.80 A"/>
    <property type="chains" value="AI=4-130"/>
</dbReference>
<dbReference type="PDB" id="4V5Y">
    <property type="method" value="X-ray"/>
    <property type="resolution" value="4.45 A"/>
    <property type="chains" value="AI/CI=2-130"/>
</dbReference>
<dbReference type="PDB" id="4V64">
    <property type="method" value="X-ray"/>
    <property type="resolution" value="3.50 A"/>
    <property type="chains" value="AI/CI=2-130"/>
</dbReference>
<dbReference type="PDB" id="4V65">
    <property type="method" value="EM"/>
    <property type="resolution" value="9.00 A"/>
    <property type="chains" value="AW=1-130"/>
</dbReference>
<dbReference type="PDB" id="4V66">
    <property type="method" value="EM"/>
    <property type="resolution" value="9.00 A"/>
    <property type="chains" value="AW=1-130"/>
</dbReference>
<dbReference type="PDB" id="4V69">
    <property type="method" value="EM"/>
    <property type="resolution" value="6.70 A"/>
    <property type="chains" value="AI=4-130"/>
</dbReference>
<dbReference type="PDB" id="4V6C">
    <property type="method" value="X-ray"/>
    <property type="resolution" value="3.19 A"/>
    <property type="chains" value="AI/CI=1-130"/>
</dbReference>
<dbReference type="PDB" id="4V6D">
    <property type="method" value="X-ray"/>
    <property type="resolution" value="3.81 A"/>
    <property type="chains" value="AI/CI=1-130"/>
</dbReference>
<dbReference type="PDB" id="4V6E">
    <property type="method" value="X-ray"/>
    <property type="resolution" value="3.71 A"/>
    <property type="chains" value="AI/CI=1-130"/>
</dbReference>
<dbReference type="PDB" id="4V6K">
    <property type="method" value="EM"/>
    <property type="resolution" value="8.25 A"/>
    <property type="chains" value="BM=1-130"/>
</dbReference>
<dbReference type="PDB" id="4V6L">
    <property type="method" value="EM"/>
    <property type="resolution" value="13.20 A"/>
    <property type="chains" value="AM=1-130"/>
</dbReference>
<dbReference type="PDB" id="4V6M">
    <property type="method" value="EM"/>
    <property type="resolution" value="7.10 A"/>
    <property type="chains" value="AI=2-130"/>
</dbReference>
<dbReference type="PDB" id="4V6N">
    <property type="method" value="EM"/>
    <property type="resolution" value="12.10 A"/>
    <property type="chains" value="BL=2-130"/>
</dbReference>
<dbReference type="PDB" id="4V6O">
    <property type="method" value="EM"/>
    <property type="resolution" value="14.70 A"/>
    <property type="chains" value="AL=2-130"/>
</dbReference>
<dbReference type="PDB" id="4V6P">
    <property type="method" value="EM"/>
    <property type="resolution" value="13.50 A"/>
    <property type="chains" value="AL=2-130"/>
</dbReference>
<dbReference type="PDB" id="4V6Q">
    <property type="method" value="EM"/>
    <property type="resolution" value="11.50 A"/>
    <property type="chains" value="AL=2-130"/>
</dbReference>
<dbReference type="PDB" id="4V6R">
    <property type="method" value="EM"/>
    <property type="resolution" value="11.50 A"/>
    <property type="chains" value="AL=2-130"/>
</dbReference>
<dbReference type="PDB" id="4V6S">
    <property type="method" value="EM"/>
    <property type="resolution" value="13.10 A"/>
    <property type="chains" value="BK=2-130"/>
</dbReference>
<dbReference type="PDB" id="4V6T">
    <property type="method" value="EM"/>
    <property type="resolution" value="8.30 A"/>
    <property type="chains" value="AI=4-130"/>
</dbReference>
<dbReference type="PDB" id="4V6V">
    <property type="method" value="EM"/>
    <property type="resolution" value="9.80 A"/>
    <property type="chains" value="AI=2-130"/>
</dbReference>
<dbReference type="PDB" id="4V6Y">
    <property type="method" value="EM"/>
    <property type="resolution" value="12.00 A"/>
    <property type="chains" value="AI=4-130"/>
</dbReference>
<dbReference type="PDB" id="4V6Z">
    <property type="method" value="EM"/>
    <property type="resolution" value="12.00 A"/>
    <property type="chains" value="AI=4-130"/>
</dbReference>
<dbReference type="PDB" id="4V70">
    <property type="method" value="EM"/>
    <property type="resolution" value="17.00 A"/>
    <property type="chains" value="AI=4-130"/>
</dbReference>
<dbReference type="PDB" id="4V71">
    <property type="method" value="EM"/>
    <property type="resolution" value="20.00 A"/>
    <property type="chains" value="AI=4-130"/>
</dbReference>
<dbReference type="PDB" id="4V72">
    <property type="method" value="EM"/>
    <property type="resolution" value="13.00 A"/>
    <property type="chains" value="AI=4-130"/>
</dbReference>
<dbReference type="PDB" id="4V73">
    <property type="method" value="EM"/>
    <property type="resolution" value="15.00 A"/>
    <property type="chains" value="AI=4-130"/>
</dbReference>
<dbReference type="PDB" id="4V74">
    <property type="method" value="EM"/>
    <property type="resolution" value="17.00 A"/>
    <property type="chains" value="AI=4-130"/>
</dbReference>
<dbReference type="PDB" id="4V75">
    <property type="method" value="EM"/>
    <property type="resolution" value="12.00 A"/>
    <property type="chains" value="AI=4-130"/>
</dbReference>
<dbReference type="PDB" id="4V76">
    <property type="method" value="EM"/>
    <property type="resolution" value="17.00 A"/>
    <property type="chains" value="AI=4-130"/>
</dbReference>
<dbReference type="PDB" id="4V77">
    <property type="method" value="EM"/>
    <property type="resolution" value="17.00 A"/>
    <property type="chains" value="AI=4-130"/>
</dbReference>
<dbReference type="PDB" id="4V78">
    <property type="method" value="EM"/>
    <property type="resolution" value="20.00 A"/>
    <property type="chains" value="AI=4-130"/>
</dbReference>
<dbReference type="PDB" id="4V79">
    <property type="method" value="EM"/>
    <property type="resolution" value="15.00 A"/>
    <property type="chains" value="AI=4-130"/>
</dbReference>
<dbReference type="PDB" id="4V7A">
    <property type="method" value="EM"/>
    <property type="resolution" value="9.00 A"/>
    <property type="chains" value="AI=4-130"/>
</dbReference>
<dbReference type="PDB" id="4V7B">
    <property type="method" value="EM"/>
    <property type="resolution" value="6.80 A"/>
    <property type="chains" value="AI=1-130"/>
</dbReference>
<dbReference type="PDB" id="4V7C">
    <property type="method" value="EM"/>
    <property type="resolution" value="7.60 A"/>
    <property type="chains" value="AI=2-130"/>
</dbReference>
<dbReference type="PDB" id="4V7D">
    <property type="method" value="EM"/>
    <property type="resolution" value="7.60 A"/>
    <property type="chains" value="BI=2-130"/>
</dbReference>
<dbReference type="PDB" id="4V7I">
    <property type="method" value="EM"/>
    <property type="resolution" value="9.60 A"/>
    <property type="chains" value="BI=1-130"/>
</dbReference>
<dbReference type="PDB" id="4V7S">
    <property type="method" value="X-ray"/>
    <property type="resolution" value="3.25 A"/>
    <property type="chains" value="AI/CI=4-130"/>
</dbReference>
<dbReference type="PDB" id="4V7T">
    <property type="method" value="X-ray"/>
    <property type="resolution" value="3.19 A"/>
    <property type="chains" value="AI/CI=4-130"/>
</dbReference>
<dbReference type="PDB" id="4V7U">
    <property type="method" value="X-ray"/>
    <property type="resolution" value="3.10 A"/>
    <property type="chains" value="AI/CI=4-130"/>
</dbReference>
<dbReference type="PDB" id="4V7V">
    <property type="method" value="X-ray"/>
    <property type="resolution" value="3.29 A"/>
    <property type="chains" value="AI/CI=4-130"/>
</dbReference>
<dbReference type="PDB" id="4V85">
    <property type="method" value="X-ray"/>
    <property type="resolution" value="3.20 A"/>
    <property type="chains" value="AI=1-130"/>
</dbReference>
<dbReference type="PDB" id="4V89">
    <property type="method" value="X-ray"/>
    <property type="resolution" value="3.70 A"/>
    <property type="chains" value="AI=1-130"/>
</dbReference>
<dbReference type="PDB" id="4V9C">
    <property type="method" value="X-ray"/>
    <property type="resolution" value="3.30 A"/>
    <property type="chains" value="AI/CI=1-130"/>
</dbReference>
<dbReference type="PDB" id="4V9D">
    <property type="method" value="X-ray"/>
    <property type="resolution" value="3.00 A"/>
    <property type="chains" value="AI/BI=4-130"/>
</dbReference>
<dbReference type="PDB" id="4V9O">
    <property type="method" value="X-ray"/>
    <property type="resolution" value="2.90 A"/>
    <property type="chains" value="BI/DI/FI/HI=1-130"/>
</dbReference>
<dbReference type="PDB" id="4V9P">
    <property type="method" value="X-ray"/>
    <property type="resolution" value="2.90 A"/>
    <property type="chains" value="BI/DI/FI/HI=1-130"/>
</dbReference>
<dbReference type="PDB" id="4WF1">
    <property type="method" value="X-ray"/>
    <property type="resolution" value="3.09 A"/>
    <property type="chains" value="AI/CI=4-130"/>
</dbReference>
<dbReference type="PDB" id="4WOI">
    <property type="method" value="X-ray"/>
    <property type="resolution" value="3.00 A"/>
    <property type="chains" value="AI/DI=1-130"/>
</dbReference>
<dbReference type="PDB" id="4WWW">
    <property type="method" value="X-ray"/>
    <property type="resolution" value="3.10 A"/>
    <property type="chains" value="QI/XI=4-130"/>
</dbReference>
<dbReference type="PDB" id="4YBB">
    <property type="method" value="X-ray"/>
    <property type="resolution" value="2.10 A"/>
    <property type="chains" value="AI/BI=4-130"/>
</dbReference>
<dbReference type="PDB" id="5AFI">
    <property type="method" value="EM"/>
    <property type="resolution" value="2.90 A"/>
    <property type="chains" value="i=1-130"/>
</dbReference>
<dbReference type="PDB" id="5H5U">
    <property type="method" value="EM"/>
    <property type="resolution" value="3.00 A"/>
    <property type="chains" value="p=2-130"/>
</dbReference>
<dbReference type="PDB" id="5IQR">
    <property type="method" value="EM"/>
    <property type="resolution" value="3.00 A"/>
    <property type="chains" value="n=1-130"/>
</dbReference>
<dbReference type="PDB" id="5IT8">
    <property type="method" value="X-ray"/>
    <property type="resolution" value="3.12 A"/>
    <property type="chains" value="AI/BI=4-130"/>
</dbReference>
<dbReference type="PDB" id="5J5B">
    <property type="method" value="X-ray"/>
    <property type="resolution" value="2.80 A"/>
    <property type="chains" value="AI/BI=4-130"/>
</dbReference>
<dbReference type="PDB" id="5J7L">
    <property type="method" value="X-ray"/>
    <property type="resolution" value="3.00 A"/>
    <property type="chains" value="AI/BI=4-130"/>
</dbReference>
<dbReference type="PDB" id="5J88">
    <property type="method" value="X-ray"/>
    <property type="resolution" value="3.32 A"/>
    <property type="chains" value="AI/BI=4-130"/>
</dbReference>
<dbReference type="PDB" id="5J8A">
    <property type="method" value="X-ray"/>
    <property type="resolution" value="3.10 A"/>
    <property type="chains" value="AI/BI=4-130"/>
</dbReference>
<dbReference type="PDB" id="5J91">
    <property type="method" value="X-ray"/>
    <property type="resolution" value="2.96 A"/>
    <property type="chains" value="AI/BI=4-130"/>
</dbReference>
<dbReference type="PDB" id="5JC9">
    <property type="method" value="X-ray"/>
    <property type="resolution" value="3.03 A"/>
    <property type="chains" value="AI/BI=4-130"/>
</dbReference>
<dbReference type="PDB" id="5JTE">
    <property type="method" value="EM"/>
    <property type="resolution" value="3.60 A"/>
    <property type="chains" value="AI=1-130"/>
</dbReference>
<dbReference type="PDB" id="5JU8">
    <property type="method" value="EM"/>
    <property type="resolution" value="3.60 A"/>
    <property type="chains" value="AI=1-130"/>
</dbReference>
<dbReference type="PDB" id="5KCR">
    <property type="method" value="EM"/>
    <property type="resolution" value="3.60 A"/>
    <property type="chains" value="1i=1-130"/>
</dbReference>
<dbReference type="PDB" id="5KCS">
    <property type="method" value="EM"/>
    <property type="resolution" value="3.90 A"/>
    <property type="chains" value="1i=1-130"/>
</dbReference>
<dbReference type="PDB" id="5KPS">
    <property type="method" value="EM"/>
    <property type="resolution" value="3.90 A"/>
    <property type="chains" value="14=1-130"/>
</dbReference>
<dbReference type="PDB" id="5KPV">
    <property type="method" value="EM"/>
    <property type="resolution" value="4.10 A"/>
    <property type="chains" value="13=1-130"/>
</dbReference>
<dbReference type="PDB" id="5KPW">
    <property type="method" value="EM"/>
    <property type="resolution" value="3.90 A"/>
    <property type="chains" value="13=1-130"/>
</dbReference>
<dbReference type="PDB" id="5KPX">
    <property type="method" value="EM"/>
    <property type="resolution" value="3.90 A"/>
    <property type="chains" value="13=1-130"/>
</dbReference>
<dbReference type="PDB" id="5L3P">
    <property type="method" value="EM"/>
    <property type="resolution" value="3.70 A"/>
    <property type="chains" value="i=1-130"/>
</dbReference>
<dbReference type="PDB" id="5LZA">
    <property type="method" value="EM"/>
    <property type="resolution" value="3.60 A"/>
    <property type="chains" value="i=4-130"/>
</dbReference>
<dbReference type="PDB" id="5LZB">
    <property type="method" value="EM"/>
    <property type="resolution" value="5.30 A"/>
    <property type="chains" value="i=4-130"/>
</dbReference>
<dbReference type="PDB" id="5LZC">
    <property type="method" value="EM"/>
    <property type="resolution" value="4.80 A"/>
    <property type="chains" value="i=4-130"/>
</dbReference>
<dbReference type="PDB" id="5LZD">
    <property type="method" value="EM"/>
    <property type="resolution" value="3.40 A"/>
    <property type="chains" value="i=4-130"/>
</dbReference>
<dbReference type="PDB" id="5LZE">
    <property type="method" value="EM"/>
    <property type="resolution" value="3.50 A"/>
    <property type="chains" value="i=4-130"/>
</dbReference>
<dbReference type="PDB" id="5LZF">
    <property type="method" value="EM"/>
    <property type="resolution" value="4.60 A"/>
    <property type="chains" value="i=4-130"/>
</dbReference>
<dbReference type="PDB" id="5MDV">
    <property type="method" value="EM"/>
    <property type="resolution" value="2.97 A"/>
    <property type="chains" value="n=1-130"/>
</dbReference>
<dbReference type="PDB" id="5MDW">
    <property type="method" value="EM"/>
    <property type="resolution" value="3.06 A"/>
    <property type="chains" value="n=1-130"/>
</dbReference>
<dbReference type="PDB" id="5MDY">
    <property type="method" value="EM"/>
    <property type="resolution" value="3.35 A"/>
    <property type="chains" value="n=1-130"/>
</dbReference>
<dbReference type="PDB" id="5MDZ">
    <property type="method" value="EM"/>
    <property type="resolution" value="3.10 A"/>
    <property type="chains" value="n=1-130"/>
</dbReference>
<dbReference type="PDB" id="5ME0">
    <property type="method" value="EM"/>
    <property type="resolution" value="13.50 A"/>
    <property type="chains" value="I=1-130"/>
</dbReference>
<dbReference type="PDB" id="5ME1">
    <property type="method" value="EM"/>
    <property type="resolution" value="13.50 A"/>
    <property type="chains" value="I=1-130"/>
</dbReference>
<dbReference type="PDB" id="5MGP">
    <property type="method" value="EM"/>
    <property type="resolution" value="3.10 A"/>
    <property type="chains" value="i=4-130"/>
</dbReference>
<dbReference type="PDB" id="5MY1">
    <property type="method" value="EM"/>
    <property type="resolution" value="7.60 A"/>
    <property type="chains" value="I=2-130"/>
</dbReference>
<dbReference type="PDB" id="5NO2">
    <property type="method" value="EM"/>
    <property type="resolution" value="5.16 A"/>
    <property type="chains" value="I=4-130"/>
</dbReference>
<dbReference type="PDB" id="5NO3">
    <property type="method" value="EM"/>
    <property type="resolution" value="5.16 A"/>
    <property type="chains" value="I=4-130"/>
</dbReference>
<dbReference type="PDB" id="5NO4">
    <property type="method" value="EM"/>
    <property type="resolution" value="5.16 A"/>
    <property type="chains" value="I=4-130"/>
</dbReference>
<dbReference type="PDB" id="5NP6">
    <property type="method" value="EM"/>
    <property type="resolution" value="3.60 A"/>
    <property type="chains" value="L=4-130"/>
</dbReference>
<dbReference type="PDB" id="5NWY">
    <property type="method" value="EM"/>
    <property type="resolution" value="2.93 A"/>
    <property type="chains" value="8=1-130"/>
</dbReference>
<dbReference type="PDB" id="5O2R">
    <property type="method" value="EM"/>
    <property type="resolution" value="3.40 A"/>
    <property type="chains" value="i=4-130"/>
</dbReference>
<dbReference type="PDB" id="5U4I">
    <property type="method" value="EM"/>
    <property type="resolution" value="3.50 A"/>
    <property type="chains" value="i=1-130"/>
</dbReference>
<dbReference type="PDB" id="5U9F">
    <property type="method" value="EM"/>
    <property type="resolution" value="3.20 A"/>
    <property type="chains" value="I=1-130"/>
</dbReference>
<dbReference type="PDB" id="5U9G">
    <property type="method" value="EM"/>
    <property type="resolution" value="3.20 A"/>
    <property type="chains" value="I=1-130"/>
</dbReference>
<dbReference type="PDB" id="5UYK">
    <property type="method" value="EM"/>
    <property type="resolution" value="3.90 A"/>
    <property type="chains" value="I=4-130"/>
</dbReference>
<dbReference type="PDB" id="5UYL">
    <property type="method" value="EM"/>
    <property type="resolution" value="3.60 A"/>
    <property type="chains" value="I=4-130"/>
</dbReference>
<dbReference type="PDB" id="5UYM">
    <property type="method" value="EM"/>
    <property type="resolution" value="3.20 A"/>
    <property type="chains" value="I=4-130"/>
</dbReference>
<dbReference type="PDB" id="5UYN">
    <property type="method" value="EM"/>
    <property type="resolution" value="4.00 A"/>
    <property type="chains" value="I=4-130"/>
</dbReference>
<dbReference type="PDB" id="5UYP">
    <property type="method" value="EM"/>
    <property type="resolution" value="3.90 A"/>
    <property type="chains" value="I=4-130"/>
</dbReference>
<dbReference type="PDB" id="5UYQ">
    <property type="method" value="EM"/>
    <property type="resolution" value="3.80 A"/>
    <property type="chains" value="I=4-130"/>
</dbReference>
<dbReference type="PDB" id="5UZ4">
    <property type="method" value="EM"/>
    <property type="resolution" value="5.80 A"/>
    <property type="chains" value="I=1-130"/>
</dbReference>
<dbReference type="PDB" id="5WDT">
    <property type="method" value="EM"/>
    <property type="resolution" value="3.00 A"/>
    <property type="chains" value="i=4-130"/>
</dbReference>
<dbReference type="PDB" id="5WE4">
    <property type="method" value="EM"/>
    <property type="resolution" value="3.10 A"/>
    <property type="chains" value="i=4-130"/>
</dbReference>
<dbReference type="PDB" id="5WE6">
    <property type="method" value="EM"/>
    <property type="resolution" value="3.40 A"/>
    <property type="chains" value="i=4-130"/>
</dbReference>
<dbReference type="PDB" id="5WF0">
    <property type="method" value="EM"/>
    <property type="resolution" value="3.60 A"/>
    <property type="chains" value="i=4-130"/>
</dbReference>
<dbReference type="PDB" id="5WFK">
    <property type="method" value="EM"/>
    <property type="resolution" value="3.40 A"/>
    <property type="chains" value="i=4-130"/>
</dbReference>
<dbReference type="PDB" id="5WFS">
    <property type="method" value="EM"/>
    <property type="resolution" value="3.00 A"/>
    <property type="chains" value="i=4-130"/>
</dbReference>
<dbReference type="PDB" id="6AWB">
    <property type="method" value="EM"/>
    <property type="resolution" value="6.70 A"/>
    <property type="chains" value="L=4-130"/>
</dbReference>
<dbReference type="PDB" id="6AWC">
    <property type="method" value="EM"/>
    <property type="resolution" value="7.90 A"/>
    <property type="chains" value="L=4-130"/>
</dbReference>
<dbReference type="PDB" id="6AWD">
    <property type="method" value="EM"/>
    <property type="resolution" value="8.10 A"/>
    <property type="chains" value="L=4-130"/>
</dbReference>
<dbReference type="PDB" id="6BU8">
    <property type="method" value="EM"/>
    <property type="resolution" value="3.50 A"/>
    <property type="chains" value="I=4-130"/>
</dbReference>
<dbReference type="PDB" id="6BY1">
    <property type="method" value="X-ray"/>
    <property type="resolution" value="3.94 A"/>
    <property type="chains" value="AI/BI=1-130"/>
</dbReference>
<dbReference type="PDB" id="6C4I">
    <property type="method" value="EM"/>
    <property type="resolution" value="3.24 A"/>
    <property type="chains" value="i=1-130"/>
</dbReference>
<dbReference type="PDB" id="6DNC">
    <property type="method" value="EM"/>
    <property type="resolution" value="3.70 A"/>
    <property type="chains" value="VA=1-130"/>
</dbReference>
<dbReference type="PDB" id="6ENF">
    <property type="method" value="EM"/>
    <property type="resolution" value="3.20 A"/>
    <property type="chains" value="i=4-130"/>
</dbReference>
<dbReference type="PDB" id="6ENJ">
    <property type="method" value="EM"/>
    <property type="resolution" value="3.70 A"/>
    <property type="chains" value="i=4-130"/>
</dbReference>
<dbReference type="PDB" id="6ENU">
    <property type="method" value="EM"/>
    <property type="resolution" value="3.10 A"/>
    <property type="chains" value="i=4-130"/>
</dbReference>
<dbReference type="PDB" id="6GWT">
    <property type="method" value="EM"/>
    <property type="resolution" value="3.80 A"/>
    <property type="chains" value="i=4-130"/>
</dbReference>
<dbReference type="PDB" id="6GXM">
    <property type="method" value="EM"/>
    <property type="resolution" value="3.80 A"/>
    <property type="chains" value="i=4-130"/>
</dbReference>
<dbReference type="PDB" id="6GXN">
    <property type="method" value="EM"/>
    <property type="resolution" value="3.90 A"/>
    <property type="chains" value="i=4-130"/>
</dbReference>
<dbReference type="PDB" id="6GXO">
    <property type="method" value="EM"/>
    <property type="resolution" value="3.90 A"/>
    <property type="chains" value="i=4-130"/>
</dbReference>
<dbReference type="PDB" id="6GXP">
    <property type="method" value="EM"/>
    <property type="resolution" value="4.40 A"/>
    <property type="chains" value="i=4-130"/>
</dbReference>
<dbReference type="PDB" id="6H4N">
    <property type="method" value="EM"/>
    <property type="resolution" value="3.00 A"/>
    <property type="chains" value="i=4-130"/>
</dbReference>
<dbReference type="PDB" id="6H58">
    <property type="method" value="EM"/>
    <property type="resolution" value="7.90 A"/>
    <property type="chains" value="i/ii=4-130"/>
</dbReference>
<dbReference type="PDB" id="6HRM">
    <property type="method" value="EM"/>
    <property type="resolution" value="2.96 A"/>
    <property type="chains" value="n=4-130"/>
</dbReference>
<dbReference type="PDB" id="6I7V">
    <property type="method" value="X-ray"/>
    <property type="resolution" value="2.90 A"/>
    <property type="chains" value="AI/BI=4-130"/>
</dbReference>
<dbReference type="PDB" id="6O7K">
    <property type="method" value="EM"/>
    <property type="resolution" value="4.20 A"/>
    <property type="chains" value="o=4-130"/>
</dbReference>
<dbReference type="PDB" id="6O9J">
    <property type="method" value="EM"/>
    <property type="resolution" value="3.90 A"/>
    <property type="chains" value="i=4-130"/>
</dbReference>
<dbReference type="PDB" id="6O9K">
    <property type="method" value="EM"/>
    <property type="resolution" value="4.00 A"/>
    <property type="chains" value="i=4-130"/>
</dbReference>
<dbReference type="PDB" id="6OFX">
    <property type="method" value="EM"/>
    <property type="resolution" value="3.30 A"/>
    <property type="chains" value="N=4-130"/>
</dbReference>
<dbReference type="PDB" id="6OG7">
    <property type="method" value="EM"/>
    <property type="resolution" value="3.30 A"/>
    <property type="chains" value="N=4-130"/>
</dbReference>
<dbReference type="PDB" id="6OGF">
    <property type="method" value="EM"/>
    <property type="resolution" value="3.90 A"/>
    <property type="chains" value="N=1-130"/>
</dbReference>
<dbReference type="PDB" id="6OGG">
    <property type="method" value="EM"/>
    <property type="resolution" value="4.20 A"/>
    <property type="chains" value="N=1-130"/>
</dbReference>
<dbReference type="PDB" id="6OGI">
    <property type="method" value="EM"/>
    <property type="resolution" value="3.40 A"/>
    <property type="chains" value="N=1-130"/>
</dbReference>
<dbReference type="PDB" id="6OM6">
    <property type="method" value="EM"/>
    <property type="resolution" value="3.10 A"/>
    <property type="chains" value="n=1-130"/>
</dbReference>
<dbReference type="PDB" id="6ORE">
    <property type="method" value="EM"/>
    <property type="resolution" value="2.90 A"/>
    <property type="chains" value="n=4-130"/>
</dbReference>
<dbReference type="PDB" id="6ORL">
    <property type="method" value="EM"/>
    <property type="resolution" value="3.50 A"/>
    <property type="chains" value="n=4-130"/>
</dbReference>
<dbReference type="PDB" id="6OSK">
    <property type="method" value="EM"/>
    <property type="resolution" value="3.60 A"/>
    <property type="chains" value="n=4-130"/>
</dbReference>
<dbReference type="PDB" id="6OSQ">
    <property type="method" value="EM"/>
    <property type="resolution" value="3.50 A"/>
    <property type="chains" value="n=4-130"/>
</dbReference>
<dbReference type="PDB" id="6OST">
    <property type="method" value="EM"/>
    <property type="resolution" value="4.20 A"/>
    <property type="chains" value="n=4-130"/>
</dbReference>
<dbReference type="PDB" id="6OT3">
    <property type="method" value="EM"/>
    <property type="resolution" value="3.90 A"/>
    <property type="chains" value="n=4-130"/>
</dbReference>
<dbReference type="PDB" id="6OUO">
    <property type="method" value="EM"/>
    <property type="resolution" value="3.70 A"/>
    <property type="chains" value="n=4-130"/>
</dbReference>
<dbReference type="PDB" id="6Q98">
    <property type="method" value="EM"/>
    <property type="resolution" value="4.30 A"/>
    <property type="chains" value="n=1-130"/>
</dbReference>
<dbReference type="PDB" id="6Q9A">
    <property type="method" value="EM"/>
    <property type="resolution" value="3.70 A"/>
    <property type="chains" value="n=4-130"/>
</dbReference>
<dbReference type="PDB" id="6SZS">
    <property type="method" value="EM"/>
    <property type="resolution" value="3.06 A"/>
    <property type="chains" value="i=1-130"/>
</dbReference>
<dbReference type="PDB" id="6TBV">
    <property type="method" value="EM"/>
    <property type="resolution" value="2.70 A"/>
    <property type="chains" value="S091=1-130"/>
</dbReference>
<dbReference type="PDB" id="6TC3">
    <property type="method" value="EM"/>
    <property type="resolution" value="2.70 A"/>
    <property type="chains" value="S091=1-130"/>
</dbReference>
<dbReference type="PDB" id="6VU3">
    <property type="method" value="EM"/>
    <property type="resolution" value="3.70 A"/>
    <property type="chains" value="O=4-130"/>
</dbReference>
<dbReference type="PDB" id="6VWL">
    <property type="method" value="EM"/>
    <property type="resolution" value="3.10 A"/>
    <property type="chains" value="h=1-130"/>
</dbReference>
<dbReference type="PDB" id="6VWM">
    <property type="method" value="EM"/>
    <property type="resolution" value="3.40 A"/>
    <property type="chains" value="h=1-130"/>
</dbReference>
<dbReference type="PDB" id="6VWN">
    <property type="method" value="EM"/>
    <property type="resolution" value="3.40 A"/>
    <property type="chains" value="h=1-130"/>
</dbReference>
<dbReference type="PDB" id="6VYQ">
    <property type="method" value="EM"/>
    <property type="resolution" value="3.70 A"/>
    <property type="chains" value="O=1-130"/>
</dbReference>
<dbReference type="PDB" id="6VYR">
    <property type="method" value="EM"/>
    <property type="resolution" value="3.80 A"/>
    <property type="chains" value="O=1-130"/>
</dbReference>
<dbReference type="PDB" id="6VYS">
    <property type="method" value="EM"/>
    <property type="resolution" value="3.70 A"/>
    <property type="chains" value="O=1-130"/>
</dbReference>
<dbReference type="PDB" id="6VYT">
    <property type="method" value="EM"/>
    <property type="resolution" value="14.00 A"/>
    <property type="chains" value="O=1-130"/>
</dbReference>
<dbReference type="PDB" id="6VYU">
    <property type="method" value="EM"/>
    <property type="resolution" value="7.00 A"/>
    <property type="chains" value="O=1-130"/>
</dbReference>
<dbReference type="PDB" id="6VYW">
    <property type="method" value="EM"/>
    <property type="resolution" value="7.00 A"/>
    <property type="chains" value="O=1-130"/>
</dbReference>
<dbReference type="PDB" id="6VYX">
    <property type="method" value="EM"/>
    <property type="resolution" value="9.90 A"/>
    <property type="chains" value="O=1-130"/>
</dbReference>
<dbReference type="PDB" id="6VYY">
    <property type="method" value="EM"/>
    <property type="resolution" value="9.90 A"/>
    <property type="chains" value="O=1-130"/>
</dbReference>
<dbReference type="PDB" id="6VYZ">
    <property type="method" value="EM"/>
    <property type="resolution" value="9.90 A"/>
    <property type="chains" value="O=1-130"/>
</dbReference>
<dbReference type="PDB" id="6VZ2">
    <property type="method" value="EM"/>
    <property type="resolution" value="10.00 A"/>
    <property type="chains" value="O=1-130"/>
</dbReference>
<dbReference type="PDB" id="6VZ3">
    <property type="method" value="EM"/>
    <property type="resolution" value="8.90 A"/>
    <property type="chains" value="O=4-130"/>
</dbReference>
<dbReference type="PDB" id="6VZ5">
    <property type="method" value="EM"/>
    <property type="resolution" value="8.90 A"/>
    <property type="chains" value="O=1-130"/>
</dbReference>
<dbReference type="PDB" id="6VZ7">
    <property type="method" value="EM"/>
    <property type="resolution" value="7.00 A"/>
    <property type="chains" value="O=4-130"/>
</dbReference>
<dbReference type="PDB" id="6VZJ">
    <property type="method" value="EM"/>
    <property type="resolution" value="4.10 A"/>
    <property type="chains" value="O=4-130"/>
</dbReference>
<dbReference type="PDB" id="6W6K">
    <property type="method" value="EM"/>
    <property type="resolution" value="3.60 A"/>
    <property type="chains" value="I=1-130"/>
</dbReference>
<dbReference type="PDB" id="6W77">
    <property type="method" value="EM"/>
    <property type="resolution" value="3.60 A"/>
    <property type="chains" value="I=1-130"/>
</dbReference>
<dbReference type="PDB" id="6W7M">
    <property type="method" value="EM"/>
    <property type="resolution" value="3.80 A"/>
    <property type="chains" value="I=1-130"/>
</dbReference>
<dbReference type="PDB" id="6W7N">
    <property type="method" value="EM"/>
    <property type="resolution" value="3.40 A"/>
    <property type="chains" value="I=1-130"/>
</dbReference>
<dbReference type="PDB" id="6WD0">
    <property type="method" value="EM"/>
    <property type="resolution" value="3.00 A"/>
    <property type="chains" value="N=4-130"/>
</dbReference>
<dbReference type="PDB" id="6WD1">
    <property type="method" value="EM"/>
    <property type="resolution" value="3.30 A"/>
    <property type="chains" value="N=4-130"/>
</dbReference>
<dbReference type="PDB" id="6WD2">
    <property type="method" value="EM"/>
    <property type="resolution" value="3.60 A"/>
    <property type="chains" value="N=4-130"/>
</dbReference>
<dbReference type="PDB" id="6WD3">
    <property type="method" value="EM"/>
    <property type="resolution" value="3.60 A"/>
    <property type="chains" value="N=4-130"/>
</dbReference>
<dbReference type="PDB" id="6WD4">
    <property type="method" value="EM"/>
    <property type="resolution" value="3.70 A"/>
    <property type="chains" value="N=4-130"/>
</dbReference>
<dbReference type="PDB" id="6WD5">
    <property type="method" value="EM"/>
    <property type="resolution" value="3.60 A"/>
    <property type="chains" value="N=4-130"/>
</dbReference>
<dbReference type="PDB" id="6WD6">
    <property type="method" value="EM"/>
    <property type="resolution" value="3.70 A"/>
    <property type="chains" value="N=4-130"/>
</dbReference>
<dbReference type="PDB" id="6WD7">
    <property type="method" value="EM"/>
    <property type="resolution" value="3.90 A"/>
    <property type="chains" value="N=4-130"/>
</dbReference>
<dbReference type="PDB" id="6WD8">
    <property type="method" value="EM"/>
    <property type="resolution" value="3.70 A"/>
    <property type="chains" value="N=4-130"/>
</dbReference>
<dbReference type="PDB" id="6WD9">
    <property type="method" value="EM"/>
    <property type="resolution" value="3.70 A"/>
    <property type="chains" value="N=4-130"/>
</dbReference>
<dbReference type="PDB" id="6WDA">
    <property type="method" value="EM"/>
    <property type="resolution" value="3.80 A"/>
    <property type="chains" value="N=4-130"/>
</dbReference>
<dbReference type="PDB" id="6WDB">
    <property type="method" value="EM"/>
    <property type="resolution" value="4.00 A"/>
    <property type="chains" value="N=4-130"/>
</dbReference>
<dbReference type="PDB" id="6WDC">
    <property type="method" value="EM"/>
    <property type="resolution" value="4.20 A"/>
    <property type="chains" value="N=4-130"/>
</dbReference>
<dbReference type="PDB" id="6WDD">
    <property type="method" value="EM"/>
    <property type="resolution" value="3.20 A"/>
    <property type="chains" value="N=4-130"/>
</dbReference>
<dbReference type="PDB" id="6WDE">
    <property type="method" value="EM"/>
    <property type="resolution" value="3.00 A"/>
    <property type="chains" value="N=4-130"/>
</dbReference>
<dbReference type="PDB" id="6WDF">
    <property type="method" value="EM"/>
    <property type="resolution" value="3.30 A"/>
    <property type="chains" value="N=4-130"/>
</dbReference>
<dbReference type="PDB" id="6WDG">
    <property type="method" value="EM"/>
    <property type="resolution" value="3.30 A"/>
    <property type="chains" value="N=4-130"/>
</dbReference>
<dbReference type="PDB" id="6WDH">
    <property type="method" value="EM"/>
    <property type="resolution" value="4.30 A"/>
    <property type="chains" value="N=4-130"/>
</dbReference>
<dbReference type="PDB" id="6WDI">
    <property type="method" value="EM"/>
    <property type="resolution" value="4.00 A"/>
    <property type="chains" value="N=4-130"/>
</dbReference>
<dbReference type="PDB" id="6WDJ">
    <property type="method" value="EM"/>
    <property type="resolution" value="3.70 A"/>
    <property type="chains" value="N=4-130"/>
</dbReference>
<dbReference type="PDB" id="6WDK">
    <property type="method" value="EM"/>
    <property type="resolution" value="3.60 A"/>
    <property type="chains" value="N=4-130"/>
</dbReference>
<dbReference type="PDB" id="6WDL">
    <property type="method" value="EM"/>
    <property type="resolution" value="3.70 A"/>
    <property type="chains" value="N=4-130"/>
</dbReference>
<dbReference type="PDB" id="6WDM">
    <property type="method" value="EM"/>
    <property type="resolution" value="3.60 A"/>
    <property type="chains" value="N=4-130"/>
</dbReference>
<dbReference type="PDB" id="6WNV">
    <property type="method" value="EM"/>
    <property type="resolution" value="3.50 A"/>
    <property type="chains" value="N=4-130"/>
</dbReference>
<dbReference type="PDB" id="6WNW">
    <property type="method" value="EM"/>
    <property type="resolution" value="3.20 A"/>
    <property type="chains" value="N=4-130"/>
</dbReference>
<dbReference type="PDB" id="6X6T">
    <property type="method" value="EM"/>
    <property type="resolution" value="3.20 A"/>
    <property type="chains" value="O=1-130"/>
</dbReference>
<dbReference type="PDB" id="6X7F">
    <property type="method" value="EM"/>
    <property type="resolution" value="3.50 A"/>
    <property type="chains" value="O=1-130"/>
</dbReference>
<dbReference type="PDB" id="6X7K">
    <property type="method" value="EM"/>
    <property type="resolution" value="3.10 A"/>
    <property type="chains" value="O=1-130"/>
</dbReference>
<dbReference type="PDB" id="6X9Q">
    <property type="method" value="EM"/>
    <property type="resolution" value="4.80 A"/>
    <property type="chains" value="O=1-130"/>
</dbReference>
<dbReference type="PDB" id="6XDQ">
    <property type="method" value="EM"/>
    <property type="resolution" value="3.70 A"/>
    <property type="chains" value="O=1-130"/>
</dbReference>
<dbReference type="PDB" id="6XDR">
    <property type="method" value="EM"/>
    <property type="resolution" value="4.70 A"/>
    <property type="chains" value="O=1-130"/>
</dbReference>
<dbReference type="PDB" id="6XE0">
    <property type="method" value="EM"/>
    <property type="resolution" value="6.80 A"/>
    <property type="chains" value="H=4-130"/>
</dbReference>
<dbReference type="PDB" id="6XGF">
    <property type="method" value="EM"/>
    <property type="resolution" value="5.00 A"/>
    <property type="chains" value="O=1-130"/>
</dbReference>
<dbReference type="PDB" id="6XII">
    <property type="method" value="EM"/>
    <property type="resolution" value="7.00 A"/>
    <property type="chains" value="O=1-130"/>
</dbReference>
<dbReference type="PDB" id="6XIJ">
    <property type="method" value="EM"/>
    <property type="resolution" value="8.00 A"/>
    <property type="chains" value="O=1-130"/>
</dbReference>
<dbReference type="PDB" id="6XZA">
    <property type="method" value="EM"/>
    <property type="resolution" value="2.66 A"/>
    <property type="chains" value="I1=4-130"/>
</dbReference>
<dbReference type="PDB" id="6XZB">
    <property type="method" value="EM"/>
    <property type="resolution" value="2.54 A"/>
    <property type="chains" value="I1=4-130"/>
</dbReference>
<dbReference type="PDB" id="6Y69">
    <property type="method" value="EM"/>
    <property type="resolution" value="2.86 A"/>
    <property type="chains" value="i=4-130"/>
</dbReference>
<dbReference type="PDB" id="6ZTJ">
    <property type="method" value="EM"/>
    <property type="resolution" value="3.40 A"/>
    <property type="chains" value="AI=1-130"/>
</dbReference>
<dbReference type="PDB" id="6ZTL">
    <property type="method" value="EM"/>
    <property type="resolution" value="3.50 A"/>
    <property type="chains" value="AI=1-130"/>
</dbReference>
<dbReference type="PDB" id="6ZTM">
    <property type="method" value="EM"/>
    <property type="resolution" value="3.30 A"/>
    <property type="chains" value="AI=1-130"/>
</dbReference>
<dbReference type="PDB" id="6ZTN">
    <property type="method" value="EM"/>
    <property type="resolution" value="3.90 A"/>
    <property type="chains" value="AI=1-130"/>
</dbReference>
<dbReference type="PDB" id="6ZTO">
    <property type="method" value="EM"/>
    <property type="resolution" value="3.00 A"/>
    <property type="chains" value="AI=1-130"/>
</dbReference>
<dbReference type="PDB" id="6ZTP">
    <property type="method" value="EM"/>
    <property type="resolution" value="3.00 A"/>
    <property type="chains" value="AI=1-130"/>
</dbReference>
<dbReference type="PDB" id="6ZU1">
    <property type="method" value="EM"/>
    <property type="resolution" value="3.00 A"/>
    <property type="chains" value="AI=1-130"/>
</dbReference>
<dbReference type="PDB" id="7ABZ">
    <property type="method" value="EM"/>
    <property type="resolution" value="3.21 A"/>
    <property type="chains" value="n=4-130"/>
</dbReference>
<dbReference type="PDB" id="7AC7">
    <property type="method" value="EM"/>
    <property type="resolution" value="3.08 A"/>
    <property type="chains" value="n=4-129"/>
</dbReference>
<dbReference type="PDB" id="7ACJ">
    <property type="method" value="EM"/>
    <property type="resolution" value="3.20 A"/>
    <property type="chains" value="n=4-130"/>
</dbReference>
<dbReference type="PDB" id="7ACR">
    <property type="method" value="EM"/>
    <property type="resolution" value="3.44 A"/>
    <property type="chains" value="n=4-130"/>
</dbReference>
<dbReference type="PDB" id="7AF3">
    <property type="method" value="EM"/>
    <property type="resolution" value="2.82 A"/>
    <property type="chains" value="I=1-130"/>
</dbReference>
<dbReference type="PDB" id="7AF5">
    <property type="method" value="EM"/>
    <property type="resolution" value="2.96 A"/>
    <property type="chains" value="I=1-130"/>
</dbReference>
<dbReference type="PDB" id="7AF8">
    <property type="method" value="EM"/>
    <property type="resolution" value="2.75 A"/>
    <property type="chains" value="I=1-130"/>
</dbReference>
<dbReference type="PDB" id="7AFA">
    <property type="method" value="EM"/>
    <property type="resolution" value="2.95 A"/>
    <property type="chains" value="I=1-130"/>
</dbReference>
<dbReference type="PDB" id="7AFD">
    <property type="method" value="EM"/>
    <property type="resolution" value="3.44 A"/>
    <property type="chains" value="I=1-130"/>
</dbReference>
<dbReference type="PDB" id="7AFH">
    <property type="method" value="EM"/>
    <property type="resolution" value="3.59 A"/>
    <property type="chains" value="I=1-130"/>
</dbReference>
<dbReference type="PDB" id="7AFK">
    <property type="method" value="EM"/>
    <property type="resolution" value="4.90 A"/>
    <property type="chains" value="I=1-130"/>
</dbReference>
<dbReference type="PDB" id="7AFN">
    <property type="method" value="EM"/>
    <property type="resolution" value="3.86 A"/>
    <property type="chains" value="I=1-130"/>
</dbReference>
<dbReference type="PDB" id="7B5K">
    <property type="method" value="EM"/>
    <property type="resolution" value="2.90 A"/>
    <property type="chains" value="i=4-130"/>
</dbReference>
<dbReference type="PDB" id="7BOE">
    <property type="method" value="EM"/>
    <property type="resolution" value="2.90 A"/>
    <property type="chains" value="I=1-130"/>
</dbReference>
<dbReference type="PDB" id="7BOH">
    <property type="method" value="EM"/>
    <property type="resolution" value="2.82 A"/>
    <property type="chains" value="I=1-130"/>
</dbReference>
<dbReference type="PDB" id="7D6Z">
    <property type="method" value="EM"/>
    <property type="resolution" value="3.40 A"/>
    <property type="chains" value="p=1-130"/>
</dbReference>
<dbReference type="PDB" id="7D80">
    <property type="method" value="EM"/>
    <property type="resolution" value="4.10 A"/>
    <property type="chains" value="J=1-130"/>
</dbReference>
<dbReference type="PDB" id="7JSS">
    <property type="method" value="EM"/>
    <property type="resolution" value="3.70 A"/>
    <property type="chains" value="N=4-130"/>
</dbReference>
<dbReference type="PDB" id="7JSW">
    <property type="method" value="EM"/>
    <property type="resolution" value="3.80 A"/>
    <property type="chains" value="N=4-130"/>
</dbReference>
<dbReference type="PDB" id="7JSZ">
    <property type="method" value="EM"/>
    <property type="resolution" value="3.70 A"/>
    <property type="chains" value="N=4-130"/>
</dbReference>
<dbReference type="PDB" id="7JT1">
    <property type="method" value="EM"/>
    <property type="resolution" value="3.30 A"/>
    <property type="chains" value="N=4-130"/>
</dbReference>
<dbReference type="PDB" id="7JT2">
    <property type="method" value="EM"/>
    <property type="resolution" value="3.50 A"/>
    <property type="chains" value="N=4-130"/>
</dbReference>
<dbReference type="PDB" id="7JT3">
    <property type="method" value="EM"/>
    <property type="resolution" value="3.70 A"/>
    <property type="chains" value="N=4-130"/>
</dbReference>
<dbReference type="PDB" id="7K00">
    <property type="method" value="EM"/>
    <property type="resolution" value="1.98 A"/>
    <property type="chains" value="I=1-130"/>
</dbReference>
<dbReference type="PDB" id="7K50">
    <property type="method" value="EM"/>
    <property type="resolution" value="3.40 A"/>
    <property type="chains" value="N=4-130"/>
</dbReference>
<dbReference type="PDB" id="7K51">
    <property type="method" value="EM"/>
    <property type="resolution" value="3.50 A"/>
    <property type="chains" value="N=4-130"/>
</dbReference>
<dbReference type="PDB" id="7K52">
    <property type="method" value="EM"/>
    <property type="resolution" value="3.40 A"/>
    <property type="chains" value="N=4-130"/>
</dbReference>
<dbReference type="PDB" id="7K53">
    <property type="method" value="EM"/>
    <property type="resolution" value="3.20 A"/>
    <property type="chains" value="N=4-130"/>
</dbReference>
<dbReference type="PDB" id="7K54">
    <property type="method" value="EM"/>
    <property type="resolution" value="3.20 A"/>
    <property type="chains" value="N=4-130"/>
</dbReference>
<dbReference type="PDB" id="7K55">
    <property type="method" value="EM"/>
    <property type="resolution" value="3.30 A"/>
    <property type="chains" value="N=4-130"/>
</dbReference>
<dbReference type="PDB" id="7LV0">
    <property type="method" value="EM"/>
    <property type="resolution" value="3.20 A"/>
    <property type="chains" value="N=4-130"/>
</dbReference>
<dbReference type="PDB" id="7M5D">
    <property type="method" value="EM"/>
    <property type="resolution" value="2.80 A"/>
    <property type="chains" value="n=4-130"/>
</dbReference>
<dbReference type="PDB" id="7N1P">
    <property type="method" value="EM"/>
    <property type="resolution" value="2.33 A"/>
    <property type="chains" value="SI=1-130"/>
</dbReference>
<dbReference type="PDB" id="7N2C">
    <property type="method" value="EM"/>
    <property type="resolution" value="2.72 A"/>
    <property type="chains" value="SI=1-130"/>
</dbReference>
<dbReference type="PDB" id="7N2U">
    <property type="method" value="EM"/>
    <property type="resolution" value="2.53 A"/>
    <property type="chains" value="SI=1-130"/>
</dbReference>
<dbReference type="PDB" id="7N2V">
    <property type="method" value="EM"/>
    <property type="resolution" value="2.54 A"/>
    <property type="chains" value="SI=1-130"/>
</dbReference>
<dbReference type="PDB" id="7N30">
    <property type="method" value="EM"/>
    <property type="resolution" value="2.66 A"/>
    <property type="chains" value="SI=1-130"/>
</dbReference>
<dbReference type="PDB" id="7N31">
    <property type="method" value="EM"/>
    <property type="resolution" value="2.69 A"/>
    <property type="chains" value="SI=1-130"/>
</dbReference>
<dbReference type="PDB" id="7NAR">
    <property type="method" value="EM"/>
    <property type="resolution" value="3.00 A"/>
    <property type="chains" value="I=1-130"/>
</dbReference>
<dbReference type="PDB" id="7NAT">
    <property type="method" value="EM"/>
    <property type="resolution" value="3.59 A"/>
    <property type="chains" value="I=1-130"/>
</dbReference>
<dbReference type="PDB" id="7NAU">
    <property type="method" value="EM"/>
    <property type="resolution" value="3.78 A"/>
    <property type="chains" value="I=1-130"/>
</dbReference>
<dbReference type="PDB" id="7NAV">
    <property type="method" value="EM"/>
    <property type="resolution" value="4.80 A"/>
    <property type="chains" value="I=1-130"/>
</dbReference>
<dbReference type="PDB" id="7NAX">
    <property type="method" value="EM"/>
    <property type="resolution" value="2.96 A"/>
    <property type="chains" value="I=1-130"/>
</dbReference>
<dbReference type="PDB" id="7NBU">
    <property type="method" value="EM"/>
    <property type="resolution" value="3.11 A"/>
    <property type="chains" value="I=4-130"/>
</dbReference>
<dbReference type="PDB" id="7O19">
    <property type="method" value="EM"/>
    <property type="resolution" value="2.90 A"/>
    <property type="chains" value="AI=1-130"/>
</dbReference>
<dbReference type="PDB" id="7O1A">
    <property type="method" value="EM"/>
    <property type="resolution" value="2.40 A"/>
    <property type="chains" value="AI=1-130"/>
</dbReference>
<dbReference type="PDB" id="7O1C">
    <property type="method" value="EM"/>
    <property type="resolution" value="2.60 A"/>
    <property type="chains" value="AI=1-130"/>
</dbReference>
<dbReference type="PDB" id="7OE0">
    <property type="method" value="EM"/>
    <property type="resolution" value="2.69 A"/>
    <property type="chains" value="I=2-130"/>
</dbReference>
<dbReference type="PDB" id="7OE1">
    <property type="method" value="EM"/>
    <property type="resolution" value="3.05 A"/>
    <property type="chains" value="I=2-130"/>
</dbReference>
<dbReference type="PDB" id="7OIZ">
    <property type="method" value="EM"/>
    <property type="resolution" value="2.90 A"/>
    <property type="chains" value="I=1-130"/>
</dbReference>
<dbReference type="PDB" id="7OJ0">
    <property type="method" value="EM"/>
    <property type="resolution" value="3.50 A"/>
    <property type="chains" value="I=1-130"/>
</dbReference>
<dbReference type="PDB" id="7P3K">
    <property type="method" value="EM"/>
    <property type="resolution" value="2.90 A"/>
    <property type="chains" value="I=1-130"/>
</dbReference>
<dbReference type="PDB" id="7PJU">
    <property type="method" value="EM"/>
    <property type="resolution" value="9.50 A"/>
    <property type="chains" value="i=1-130"/>
</dbReference>
<dbReference type="PDB" id="7PJV">
    <property type="method" value="EM"/>
    <property type="resolution" value="3.10 A"/>
    <property type="chains" value="i=1-130"/>
</dbReference>
<dbReference type="PDB" id="7PJY">
    <property type="method" value="EM"/>
    <property type="resolution" value="3.10 A"/>
    <property type="chains" value="i=1-130"/>
</dbReference>
<dbReference type="PDB" id="7QG8">
    <property type="method" value="EM"/>
    <property type="resolution" value="3.97 A"/>
    <property type="chains" value="8=1-130"/>
</dbReference>
<dbReference type="PDB" id="7QGH">
    <property type="method" value="EM"/>
    <property type="resolution" value="4.48 A"/>
    <property type="chains" value="8=1-130"/>
</dbReference>
<dbReference type="PDB" id="7QGN">
    <property type="method" value="EM"/>
    <property type="resolution" value="3.37 A"/>
    <property type="chains" value="8=1-130"/>
</dbReference>
<dbReference type="PDB" id="7QGR">
    <property type="method" value="EM"/>
    <property type="resolution" value="5.70 A"/>
    <property type="chains" value="8=1-130"/>
</dbReference>
<dbReference type="PDB" id="7S1G">
    <property type="method" value="EM"/>
    <property type="resolution" value="2.48 A"/>
    <property type="chains" value="p=1-130"/>
</dbReference>
<dbReference type="PDB" id="7S1H">
    <property type="method" value="EM"/>
    <property type="resolution" value="2.35 A"/>
    <property type="chains" value="p=1-130"/>
</dbReference>
<dbReference type="PDB" id="7S1I">
    <property type="method" value="EM"/>
    <property type="resolution" value="2.48 A"/>
    <property type="chains" value="p=1-130"/>
</dbReference>
<dbReference type="PDB" id="7S1J">
    <property type="method" value="EM"/>
    <property type="resolution" value="2.47 A"/>
    <property type="chains" value="p=1-130"/>
</dbReference>
<dbReference type="PDB" id="7S1K">
    <property type="method" value="EM"/>
    <property type="resolution" value="2.42 A"/>
    <property type="chains" value="p=1-130"/>
</dbReference>
<dbReference type="PDB" id="7SA4">
    <property type="method" value="EM"/>
    <property type="resolution" value="2.55 A"/>
    <property type="chains" value="n=1-130"/>
</dbReference>
<dbReference type="PDB" id="7SS9">
    <property type="method" value="EM"/>
    <property type="resolution" value="3.90 A"/>
    <property type="chains" value="N=4-130"/>
</dbReference>
<dbReference type="PDB" id="7SSD">
    <property type="method" value="EM"/>
    <property type="resolution" value="3.30 A"/>
    <property type="chains" value="N=4-130"/>
</dbReference>
<dbReference type="PDB" id="7SSL">
    <property type="method" value="EM"/>
    <property type="resolution" value="3.80 A"/>
    <property type="chains" value="N=4-130"/>
</dbReference>
<dbReference type="PDB" id="7SSN">
    <property type="method" value="EM"/>
    <property type="resolution" value="3.20 A"/>
    <property type="chains" value="N=4-130"/>
</dbReference>
<dbReference type="PDB" id="7SSO">
    <property type="method" value="EM"/>
    <property type="resolution" value="3.20 A"/>
    <property type="chains" value="N=4-130"/>
</dbReference>
<dbReference type="PDB" id="7SSW">
    <property type="method" value="EM"/>
    <property type="resolution" value="3.80 A"/>
    <property type="chains" value="N=4-130"/>
</dbReference>
<dbReference type="PDB" id="7ST2">
    <property type="method" value="EM"/>
    <property type="resolution" value="2.90 A"/>
    <property type="chains" value="N=4-130"/>
</dbReference>
<dbReference type="PDB" id="7ST6">
    <property type="method" value="EM"/>
    <property type="resolution" value="3.00 A"/>
    <property type="chains" value="N=4-130"/>
</dbReference>
<dbReference type="PDB" id="7ST7">
    <property type="method" value="EM"/>
    <property type="resolution" value="3.20 A"/>
    <property type="chains" value="N=4-130"/>
</dbReference>
<dbReference type="PDB" id="7TOS">
    <property type="method" value="EM"/>
    <property type="resolution" value="2.90 A"/>
    <property type="chains" value="S09=4-130"/>
</dbReference>
<dbReference type="PDB" id="7UG7">
    <property type="method" value="EM"/>
    <property type="resolution" value="2.58 A"/>
    <property type="chains" value="SI=1-130"/>
</dbReference>
<dbReference type="PDB" id="7UPH">
    <property type="method" value="EM"/>
    <property type="resolution" value="4.18 A"/>
    <property type="chains" value="d=4-130"/>
</dbReference>
<dbReference type="PDB" id="7Y7C">
    <property type="method" value="EM"/>
    <property type="resolution" value="2.51 A"/>
    <property type="chains" value="I=1-130"/>
</dbReference>
<dbReference type="PDB" id="7Y7D">
    <property type="method" value="EM"/>
    <property type="resolution" value="2.58 A"/>
    <property type="chains" value="I=1-130"/>
</dbReference>
<dbReference type="PDB" id="7Y7E">
    <property type="method" value="EM"/>
    <property type="resolution" value="2.41 A"/>
    <property type="chains" value="I=1-130"/>
</dbReference>
<dbReference type="PDB" id="7Y7F">
    <property type="method" value="EM"/>
    <property type="resolution" value="2.43 A"/>
    <property type="chains" value="I=1-130"/>
</dbReference>
<dbReference type="PDB" id="7Y7G">
    <property type="method" value="EM"/>
    <property type="resolution" value="2.34 A"/>
    <property type="chains" value="I=1-130"/>
</dbReference>
<dbReference type="PDB" id="7Y7H">
    <property type="method" value="EM"/>
    <property type="resolution" value="2.51 A"/>
    <property type="chains" value="I=1-130"/>
</dbReference>
<dbReference type="PDB" id="7ZTA">
    <property type="method" value="EM"/>
    <property type="resolution" value="2.70 A"/>
    <property type="chains" value="S091=4-130"/>
</dbReference>
<dbReference type="PDB" id="8A3L">
    <property type="method" value="EM"/>
    <property type="resolution" value="3.42 A"/>
    <property type="chains" value="I=1-130"/>
</dbReference>
<dbReference type="PDB" id="8AKN">
    <property type="method" value="EM"/>
    <property type="resolution" value="2.30 A"/>
    <property type="chains" value="J=1-130"/>
</dbReference>
<dbReference type="PDB" id="8AM9">
    <property type="method" value="EM"/>
    <property type="resolution" value="2.80 A"/>
    <property type="chains" value="J=1-130"/>
</dbReference>
<dbReference type="PDB" id="8AYE">
    <property type="method" value="EM"/>
    <property type="resolution" value="1.96 A"/>
    <property type="chains" value="I=1-130"/>
</dbReference>
<dbReference type="PDB" id="8B0X">
    <property type="method" value="EM"/>
    <property type="resolution" value="1.55 A"/>
    <property type="chains" value="I=1-130"/>
</dbReference>
<dbReference type="PDB" id="8B7Y">
    <property type="method" value="EM"/>
    <property type="resolution" value="3.00 A"/>
    <property type="chains" value="Q=1-130"/>
</dbReference>
<dbReference type="PDB" id="8BF7">
    <property type="method" value="EM"/>
    <property type="resolution" value="2.33 A"/>
    <property type="chains" value="m=1-130"/>
</dbReference>
<dbReference type="PDB" id="8BGE">
    <property type="method" value="EM"/>
    <property type="resolution" value="2.11 A"/>
    <property type="chains" value="m=1-130"/>
</dbReference>
<dbReference type="PDB" id="8BGH">
    <property type="method" value="EM"/>
    <property type="resolution" value="2.88 A"/>
    <property type="chains" value="m=1-130"/>
</dbReference>
<dbReference type="PDB" id="8BH4">
    <property type="method" value="EM"/>
    <property type="resolution" value="2.62 A"/>
    <property type="chains" value="m=1-130"/>
</dbReference>
<dbReference type="PDB" id="8BHJ">
    <property type="method" value="EM"/>
    <property type="resolution" value="2.81 A"/>
    <property type="chains" value="m=1-130"/>
</dbReference>
<dbReference type="PDB" id="8BHL">
    <property type="method" value="EM"/>
    <property type="resolution" value="2.21 A"/>
    <property type="chains" value="m=1-130"/>
</dbReference>
<dbReference type="PDB" id="8BHN">
    <property type="method" value="EM"/>
    <property type="resolution" value="2.85 A"/>
    <property type="chains" value="m=1-130"/>
</dbReference>
<dbReference type="PDB" id="8BHP">
    <property type="method" value="EM"/>
    <property type="resolution" value="2.37 A"/>
    <property type="chains" value="m=1-130"/>
</dbReference>
<dbReference type="PDB" id="8BIL">
    <property type="method" value="EM"/>
    <property type="resolution" value="2.04 A"/>
    <property type="chains" value="m=1-130"/>
</dbReference>
<dbReference type="PDB" id="8BIM">
    <property type="method" value="EM"/>
    <property type="resolution" value="2.04 A"/>
    <property type="chains" value="m=1-130"/>
</dbReference>
<dbReference type="PDB" id="8CA7">
    <property type="method" value="EM"/>
    <property type="resolution" value="2.06 A"/>
    <property type="chains" value="I=1-130"/>
</dbReference>
<dbReference type="PDB" id="8CAZ">
    <property type="method" value="EM"/>
    <property type="resolution" value="2.11 A"/>
    <property type="chains" value="I=1-130"/>
</dbReference>
<dbReference type="PDB" id="8CF1">
    <property type="method" value="EM"/>
    <property type="resolution" value="1.82 A"/>
    <property type="chains" value="I=1-130"/>
</dbReference>
<dbReference type="PDB" id="8CF8">
    <property type="method" value="EM"/>
    <property type="resolution" value="2.20 A"/>
    <property type="chains" value="I=1-130"/>
</dbReference>
<dbReference type="PDB" id="8CGI">
    <property type="method" value="EM"/>
    <property type="resolution" value="1.89 A"/>
    <property type="chains" value="I=1-130"/>
</dbReference>
<dbReference type="PDB" id="8EIU">
    <property type="method" value="EM"/>
    <property type="resolution" value="2.24 A"/>
    <property type="chains" value="I=1-130"/>
</dbReference>
<dbReference type="PDB" id="8EKC">
    <property type="method" value="EM"/>
    <property type="resolution" value="2.70 A"/>
    <property type="chains" value="i=1-130"/>
</dbReference>
<dbReference type="PDB" id="8EMM">
    <property type="method" value="EM"/>
    <property type="resolution" value="2.10 A"/>
    <property type="chains" value="I=1-130"/>
</dbReference>
<dbReference type="PDB" id="8EYQ">
    <property type="method" value="EM"/>
    <property type="resolution" value="3.30 A"/>
    <property type="chains" value="I=1-130"/>
</dbReference>
<dbReference type="PDB" id="8EYT">
    <property type="method" value="EM"/>
    <property type="resolution" value="2.80 A"/>
    <property type="chains" value="I=1-130"/>
</dbReference>
<dbReference type="PDB" id="8FIZ">
    <property type="method" value="EM"/>
    <property type="resolution" value="3.80 A"/>
    <property type="chains" value="AK=1-130"/>
</dbReference>
<dbReference type="PDB" id="8FTO">
    <property type="method" value="EM"/>
    <property type="resolution" value="1.85 A"/>
    <property type="chains" value="I=1-130"/>
</dbReference>
<dbReference type="PDB" id="8FZD">
    <property type="method" value="EM"/>
    <property type="resolution" value="3.10 A"/>
    <property type="chains" value="i=1-130"/>
</dbReference>
<dbReference type="PDB" id="8FZE">
    <property type="method" value="EM"/>
    <property type="resolution" value="3.00 A"/>
    <property type="chains" value="i=1-130"/>
</dbReference>
<dbReference type="PDB" id="8FZF">
    <property type="method" value="EM"/>
    <property type="resolution" value="3.20 A"/>
    <property type="chains" value="i=1-130"/>
</dbReference>
<dbReference type="PDB" id="8FZG">
    <property type="method" value="EM"/>
    <property type="resolution" value="3.10 A"/>
    <property type="chains" value="i=1-130"/>
</dbReference>
<dbReference type="PDB" id="8FZH">
    <property type="method" value="EM"/>
    <property type="resolution" value="2.90 A"/>
    <property type="chains" value="i=1-130"/>
</dbReference>
<dbReference type="PDB" id="8FZI">
    <property type="method" value="EM"/>
    <property type="resolution" value="3.10 A"/>
    <property type="chains" value="i=1-130"/>
</dbReference>
<dbReference type="PDB" id="8FZJ">
    <property type="method" value="EM"/>
    <property type="resolution" value="3.00 A"/>
    <property type="chains" value="i=1-130"/>
</dbReference>
<dbReference type="PDB" id="8G2U">
    <property type="method" value="EM"/>
    <property type="resolution" value="3.00 A"/>
    <property type="chains" value="h=4-130"/>
</dbReference>
<dbReference type="PDB" id="8G31">
    <property type="method" value="EM"/>
    <property type="resolution" value="3.20 A"/>
    <property type="chains" value="h=4-130"/>
</dbReference>
<dbReference type="PDB" id="8G34">
    <property type="method" value="EM"/>
    <property type="resolution" value="3.20 A"/>
    <property type="chains" value="h=4-130"/>
</dbReference>
<dbReference type="PDB" id="8G38">
    <property type="method" value="EM"/>
    <property type="resolution" value="3.20 A"/>
    <property type="chains" value="h=4-130"/>
</dbReference>
<dbReference type="PDB" id="8G6W">
    <property type="method" value="EM"/>
    <property type="resolution" value="2.02 A"/>
    <property type="chains" value="I=1-130"/>
</dbReference>
<dbReference type="PDB" id="8G7P">
    <property type="method" value="EM"/>
    <property type="resolution" value="2.90 A"/>
    <property type="chains" value="i=1-130"/>
</dbReference>
<dbReference type="PDB" id="8G7Q">
    <property type="method" value="EM"/>
    <property type="resolution" value="3.10 A"/>
    <property type="chains" value="i=1-130"/>
</dbReference>
<dbReference type="PDB" id="8G7R">
    <property type="method" value="EM"/>
    <property type="resolution" value="2.80 A"/>
    <property type="chains" value="i=1-130"/>
</dbReference>
<dbReference type="PDB" id="8G7S">
    <property type="method" value="EM"/>
    <property type="resolution" value="3.10 A"/>
    <property type="chains" value="i=1-130"/>
</dbReference>
<dbReference type="PDB" id="8HSP">
    <property type="method" value="EM"/>
    <property type="resolution" value="2.32 A"/>
    <property type="chains" value="I=1-130"/>
</dbReference>
<dbReference type="PDB" id="8HTZ">
    <property type="method" value="EM"/>
    <property type="resolution" value="2.40 A"/>
    <property type="chains" value="I=1-130"/>
</dbReference>
<dbReference type="PDB" id="8HU1">
    <property type="method" value="EM"/>
    <property type="resolution" value="2.69 A"/>
    <property type="chains" value="I=1-130"/>
</dbReference>
<dbReference type="PDB" id="8IFB">
    <property type="method" value="EM"/>
    <property type="resolution" value="2.43 A"/>
    <property type="chains" value="I=1-130"/>
</dbReference>
<dbReference type="PDB" id="8IFC">
    <property type="method" value="EM"/>
    <property type="resolution" value="2.90 A"/>
    <property type="chains" value="I=1-130"/>
</dbReference>
<dbReference type="PDB" id="8JSG">
    <property type="method" value="EM"/>
    <property type="resolution" value="4.60 A"/>
    <property type="chains" value="o=2-130"/>
</dbReference>
<dbReference type="PDB" id="8K3O">
    <property type="method" value="EM"/>
    <property type="resolution" value="3.88 A"/>
    <property type="chains" value="I=1-130"/>
</dbReference>
<dbReference type="PDB" id="8K4E">
    <property type="method" value="EM"/>
    <property type="resolution" value="3.40 A"/>
    <property type="chains" value="I=1-130"/>
</dbReference>
<dbReference type="PDB" id="8P16">
    <property type="method" value="EM"/>
    <property type="resolution" value="2.77 A"/>
    <property type="chains" value="n=1-130"/>
</dbReference>
<dbReference type="PDB" id="8P17">
    <property type="method" value="EM"/>
    <property type="resolution" value="2.78 A"/>
    <property type="chains" value="n=1-130"/>
</dbReference>
<dbReference type="PDB" id="8P18">
    <property type="method" value="EM"/>
    <property type="resolution" value="2.77 A"/>
    <property type="chains" value="n=1-130"/>
</dbReference>
<dbReference type="PDB" id="8PEG">
    <property type="method" value="EM"/>
    <property type="resolution" value="3.30 A"/>
    <property type="chains" value="I=1-130"/>
</dbReference>
<dbReference type="PDB" id="8PHJ">
    <property type="method" value="EM"/>
    <property type="resolution" value="3.67 A"/>
    <property type="chains" value="I=1-130"/>
</dbReference>
<dbReference type="PDB" id="8PKL">
    <property type="method" value="EM"/>
    <property type="resolution" value="3.09 A"/>
    <property type="chains" value="I=1-130"/>
</dbReference>
<dbReference type="PDB" id="8PVA">
    <property type="method" value="EM"/>
    <property type="resolution" value="4.50 A"/>
    <property type="chains" value="I=1-130"/>
</dbReference>
<dbReference type="PDB" id="8Q4F">
    <property type="method" value="EM"/>
    <property type="resolution" value="3.10 A"/>
    <property type="chains" value="I=1-130"/>
</dbReference>
<dbReference type="PDB" id="8QBT">
    <property type="method" value="EM"/>
    <property type="resolution" value="2.20 A"/>
    <property type="chains" value="q=1-130"/>
</dbReference>
<dbReference type="PDB" id="8QK7">
    <property type="method" value="EM"/>
    <property type="resolution" value="2.77 A"/>
    <property type="chains" value="n=1-130"/>
</dbReference>
<dbReference type="PDB" id="8QOA">
    <property type="method" value="EM"/>
    <property type="resolution" value="2.00 A"/>
    <property type="chains" value="I=1-130"/>
</dbReference>
<dbReference type="PDB" id="8R3V">
    <property type="method" value="EM"/>
    <property type="resolution" value="3.28 A"/>
    <property type="chains" value="I1/I2=1-130"/>
</dbReference>
<dbReference type="PDB" id="8R6C">
    <property type="method" value="EM"/>
    <property type="resolution" value="2.20 A"/>
    <property type="chains" value="I=1-130"/>
</dbReference>
<dbReference type="PDB" id="8R8M">
    <property type="method" value="EM"/>
    <property type="resolution" value="2.40 A"/>
    <property type="chains" value="I=1-130"/>
</dbReference>
<dbReference type="PDB" id="8RCL">
    <property type="method" value="EM"/>
    <property type="resolution" value="3.49 A"/>
    <property type="chains" value="I1/I2=1-130"/>
</dbReference>
<dbReference type="PDB" id="8RCM">
    <property type="method" value="EM"/>
    <property type="resolution" value="3.59 A"/>
    <property type="chains" value="I1/I2=1-130"/>
</dbReference>
<dbReference type="PDB" id="8RCS">
    <property type="method" value="EM"/>
    <property type="resolution" value="4.46 A"/>
    <property type="chains" value="I1/I2=1-130"/>
</dbReference>
<dbReference type="PDB" id="8RCT">
    <property type="method" value="EM"/>
    <property type="resolution" value="5.32 A"/>
    <property type="chains" value="I1/I2=1-130"/>
</dbReference>
<dbReference type="PDB" id="8SYL">
    <property type="method" value="EM"/>
    <property type="resolution" value="2.90 A"/>
    <property type="chains" value="i=1-130"/>
</dbReference>
<dbReference type="PDB" id="8T5D">
    <property type="method" value="EM"/>
    <property type="resolution" value="3.20 A"/>
    <property type="chains" value="h=4-130"/>
</dbReference>
<dbReference type="PDB" id="8T5H">
    <property type="method" value="EM"/>
    <property type="resolution" value="3.30 A"/>
    <property type="chains" value="h=4-130"/>
</dbReference>
<dbReference type="PDB" id="8UPO">
    <property type="method" value="EM"/>
    <property type="resolution" value="5.50 A"/>
    <property type="chains" value="O=1-130"/>
</dbReference>
<dbReference type="PDB" id="8UPR">
    <property type="method" value="EM"/>
    <property type="resolution" value="5.30 A"/>
    <property type="chains" value="O=1-130"/>
</dbReference>
<dbReference type="PDB" id="8UQL">
    <property type="method" value="EM"/>
    <property type="resolution" value="3.20 A"/>
    <property type="chains" value="O=1-130"/>
</dbReference>
<dbReference type="PDB" id="8UQM">
    <property type="method" value="EM"/>
    <property type="resolution" value="5.30 A"/>
    <property type="chains" value="O=1-130"/>
</dbReference>
<dbReference type="PDB" id="8UQP">
    <property type="method" value="EM"/>
    <property type="resolution" value="3.80 A"/>
    <property type="chains" value="O=1-130"/>
</dbReference>
<dbReference type="PDB" id="8UR0">
    <property type="method" value="EM"/>
    <property type="resolution" value="3.40 A"/>
    <property type="chains" value="O=1-130"/>
</dbReference>
<dbReference type="PDB" id="8URH">
    <property type="method" value="EM"/>
    <property type="resolution" value="5.70 A"/>
    <property type="chains" value="O=1-130"/>
</dbReference>
<dbReference type="PDB" id="8URI">
    <property type="method" value="EM"/>
    <property type="resolution" value="5.30 A"/>
    <property type="chains" value="O=1-130"/>
</dbReference>
<dbReference type="PDB" id="8URX">
    <property type="method" value="EM"/>
    <property type="resolution" value="6.60 A"/>
    <property type="chains" value="O=1-130"/>
</dbReference>
<dbReference type="PDB" id="8URY">
    <property type="method" value="EM"/>
    <property type="resolution" value="3.10 A"/>
    <property type="chains" value="O=1-130"/>
</dbReference>
<dbReference type="PDB" id="8VS9">
    <property type="method" value="EM"/>
    <property type="resolution" value="3.90 A"/>
    <property type="chains" value="S09=1-130"/>
</dbReference>
<dbReference type="PDB" id="8VSA">
    <property type="method" value="EM"/>
    <property type="resolution" value="3.70 A"/>
    <property type="chains" value="S09=1-130"/>
</dbReference>
<dbReference type="PDB" id="8YUO">
    <property type="method" value="EM"/>
    <property type="resolution" value="2.25 A"/>
    <property type="chains" value="I=1-130"/>
</dbReference>
<dbReference type="PDB" id="8YUP">
    <property type="method" value="EM"/>
    <property type="resolution" value="2.39 A"/>
    <property type="chains" value="I=1-130"/>
</dbReference>
<dbReference type="PDB" id="8YUQ">
    <property type="method" value="EM"/>
    <property type="resolution" value="2.41 A"/>
    <property type="chains" value="I=1-130"/>
</dbReference>
<dbReference type="PDB" id="8YUR">
    <property type="method" value="EM"/>
    <property type="resolution" value="2.47 A"/>
    <property type="chains" value="I=1-130"/>
</dbReference>
<dbReference type="PDB" id="8YUS">
    <property type="method" value="EM"/>
    <property type="resolution" value="2.43 A"/>
    <property type="chains" value="I=1-130"/>
</dbReference>
<dbReference type="PDB" id="9DUK">
    <property type="method" value="EM"/>
    <property type="resolution" value="2.56 A"/>
    <property type="chains" value="I=1-130"/>
</dbReference>
<dbReference type="PDB" id="9DUL">
    <property type="method" value="EM"/>
    <property type="resolution" value="2.56 A"/>
    <property type="chains" value="I=1-130"/>
</dbReference>
<dbReference type="PDB" id="9FBV">
    <property type="method" value="EM"/>
    <property type="resolution" value="2.40 A"/>
    <property type="chains" value="I=1-130"/>
</dbReference>
<dbReference type="PDB" id="9GFT">
    <property type="method" value="EM"/>
    <property type="resolution" value="3.10 A"/>
    <property type="chains" value="8/AI=1-130"/>
</dbReference>
<dbReference type="PDB" id="9GGR">
    <property type="method" value="EM"/>
    <property type="resolution" value="3.20 A"/>
    <property type="chains" value="8/AI=1-130"/>
</dbReference>
<dbReference type="PDB" id="9GUP">
    <property type="method" value="EM"/>
    <property type="resolution" value="2.80 A"/>
    <property type="chains" value="J=1-130"/>
</dbReference>
<dbReference type="PDB" id="9GUQ">
    <property type="method" value="EM"/>
    <property type="resolution" value="3.10 A"/>
    <property type="chains" value="J=1-130"/>
</dbReference>
<dbReference type="PDB" id="9GUS">
    <property type="method" value="EM"/>
    <property type="resolution" value="3.50 A"/>
    <property type="chains" value="J=1-130"/>
</dbReference>
<dbReference type="PDB" id="9GUT">
    <property type="method" value="EM"/>
    <property type="resolution" value="2.80 A"/>
    <property type="chains" value="J=1-130"/>
</dbReference>
<dbReference type="PDB" id="9GUU">
    <property type="method" value="EM"/>
    <property type="resolution" value="2.50 A"/>
    <property type="chains" value="J=1-130"/>
</dbReference>
<dbReference type="PDB" id="9GUV">
    <property type="method" value="EM"/>
    <property type="resolution" value="3.00 A"/>
    <property type="chains" value="J=1-130"/>
</dbReference>
<dbReference type="PDB" id="9GUW">
    <property type="method" value="EM"/>
    <property type="resolution" value="3.10 A"/>
    <property type="chains" value="J=1-130"/>
</dbReference>
<dbReference type="PDB" id="9GUX">
    <property type="method" value="EM"/>
    <property type="resolution" value="3.30 A"/>
    <property type="chains" value="J=1-130"/>
</dbReference>
<dbReference type="PDB" id="9MOR">
    <property type="method" value="EM"/>
    <property type="resolution" value="2.65 A"/>
    <property type="chains" value="n=1-130"/>
</dbReference>
<dbReference type="PDB" id="9MQ4">
    <property type="method" value="EM"/>
    <property type="resolution" value="2.78 A"/>
    <property type="chains" value="n=1-130"/>
</dbReference>
<dbReference type="PDBsum" id="2YKR"/>
<dbReference type="PDBsum" id="3IY8"/>
<dbReference type="PDBsum" id="3J9Y"/>
<dbReference type="PDBsum" id="3J9Z"/>
<dbReference type="PDBsum" id="3JA1"/>
<dbReference type="PDBsum" id="3JBU"/>
<dbReference type="PDBsum" id="3JBV"/>
<dbReference type="PDBsum" id="3JCD"/>
<dbReference type="PDBsum" id="3JCE"/>
<dbReference type="PDBsum" id="3JCJ"/>
<dbReference type="PDBsum" id="3JCN"/>
<dbReference type="PDBsum" id="4A2I"/>
<dbReference type="PDBsum" id="4ADV"/>
<dbReference type="PDBsum" id="4U1U"/>
<dbReference type="PDBsum" id="4U1V"/>
<dbReference type="PDBsum" id="4U20"/>
<dbReference type="PDBsum" id="4U24"/>
<dbReference type="PDBsum" id="4U25"/>
<dbReference type="PDBsum" id="4U26"/>
<dbReference type="PDBsum" id="4U27"/>
<dbReference type="PDBsum" id="4V47"/>
<dbReference type="PDBsum" id="4V48"/>
<dbReference type="PDBsum" id="4V4H"/>
<dbReference type="PDBsum" id="4V4Q"/>
<dbReference type="PDBsum" id="4V4V"/>
<dbReference type="PDBsum" id="4V4W"/>
<dbReference type="PDBsum" id="4V50"/>
<dbReference type="PDBsum" id="4V52"/>
<dbReference type="PDBsum" id="4V53"/>
<dbReference type="PDBsum" id="4V54"/>
<dbReference type="PDBsum" id="4V55"/>
<dbReference type="PDBsum" id="4V56"/>
<dbReference type="PDBsum" id="4V57"/>
<dbReference type="PDBsum" id="4V5B"/>
<dbReference type="PDBsum" id="4V5H"/>
<dbReference type="PDBsum" id="4V5Y"/>
<dbReference type="PDBsum" id="4V64"/>
<dbReference type="PDBsum" id="4V65"/>
<dbReference type="PDBsum" id="4V66"/>
<dbReference type="PDBsum" id="4V69"/>
<dbReference type="PDBsum" id="4V6C"/>
<dbReference type="PDBsum" id="4V6D"/>
<dbReference type="PDBsum" id="4V6E"/>
<dbReference type="PDBsum" id="4V6K"/>
<dbReference type="PDBsum" id="4V6L"/>
<dbReference type="PDBsum" id="4V6M"/>
<dbReference type="PDBsum" id="4V6N"/>
<dbReference type="PDBsum" id="4V6O"/>
<dbReference type="PDBsum" id="4V6P"/>
<dbReference type="PDBsum" id="4V6Q"/>
<dbReference type="PDBsum" id="4V6R"/>
<dbReference type="PDBsum" id="4V6S"/>
<dbReference type="PDBsum" id="4V6T"/>
<dbReference type="PDBsum" id="4V6V"/>
<dbReference type="PDBsum" id="4V6Y"/>
<dbReference type="PDBsum" id="4V6Z"/>
<dbReference type="PDBsum" id="4V70"/>
<dbReference type="PDBsum" id="4V71"/>
<dbReference type="PDBsum" id="4V72"/>
<dbReference type="PDBsum" id="4V73"/>
<dbReference type="PDBsum" id="4V74"/>
<dbReference type="PDBsum" id="4V75"/>
<dbReference type="PDBsum" id="4V76"/>
<dbReference type="PDBsum" id="4V77"/>
<dbReference type="PDBsum" id="4V78"/>
<dbReference type="PDBsum" id="4V79"/>
<dbReference type="PDBsum" id="4V7A"/>
<dbReference type="PDBsum" id="4V7B"/>
<dbReference type="PDBsum" id="4V7C"/>
<dbReference type="PDBsum" id="4V7D"/>
<dbReference type="PDBsum" id="4V7I"/>
<dbReference type="PDBsum" id="4V7S"/>
<dbReference type="PDBsum" id="4V7T"/>
<dbReference type="PDBsum" id="4V7U"/>
<dbReference type="PDBsum" id="4V7V"/>
<dbReference type="PDBsum" id="4V85"/>
<dbReference type="PDBsum" id="4V89"/>
<dbReference type="PDBsum" id="4V9C"/>
<dbReference type="PDBsum" id="4V9D"/>
<dbReference type="PDBsum" id="4V9O"/>
<dbReference type="PDBsum" id="4V9P"/>
<dbReference type="PDBsum" id="4WF1"/>
<dbReference type="PDBsum" id="4WOI"/>
<dbReference type="PDBsum" id="4WWW"/>
<dbReference type="PDBsum" id="4YBB"/>
<dbReference type="PDBsum" id="5AFI"/>
<dbReference type="PDBsum" id="5H5U"/>
<dbReference type="PDBsum" id="5IQR"/>
<dbReference type="PDBsum" id="5IT8"/>
<dbReference type="PDBsum" id="5J5B"/>
<dbReference type="PDBsum" id="5J7L"/>
<dbReference type="PDBsum" id="5J88"/>
<dbReference type="PDBsum" id="5J8A"/>
<dbReference type="PDBsum" id="5J91"/>
<dbReference type="PDBsum" id="5JC9"/>
<dbReference type="PDBsum" id="5JTE"/>
<dbReference type="PDBsum" id="5JU8"/>
<dbReference type="PDBsum" id="5KCR"/>
<dbReference type="PDBsum" id="5KCS"/>
<dbReference type="PDBsum" id="5KPS"/>
<dbReference type="PDBsum" id="5KPV"/>
<dbReference type="PDBsum" id="5KPW"/>
<dbReference type="PDBsum" id="5KPX"/>
<dbReference type="PDBsum" id="5L3P"/>
<dbReference type="PDBsum" id="5LZA"/>
<dbReference type="PDBsum" id="5LZB"/>
<dbReference type="PDBsum" id="5LZC"/>
<dbReference type="PDBsum" id="5LZD"/>
<dbReference type="PDBsum" id="5LZE"/>
<dbReference type="PDBsum" id="5LZF"/>
<dbReference type="PDBsum" id="5MDV"/>
<dbReference type="PDBsum" id="5MDW"/>
<dbReference type="PDBsum" id="5MDY"/>
<dbReference type="PDBsum" id="5MDZ"/>
<dbReference type="PDBsum" id="5ME0"/>
<dbReference type="PDBsum" id="5ME1"/>
<dbReference type="PDBsum" id="5MGP"/>
<dbReference type="PDBsum" id="5MY1"/>
<dbReference type="PDBsum" id="5NO2"/>
<dbReference type="PDBsum" id="5NO3"/>
<dbReference type="PDBsum" id="5NO4"/>
<dbReference type="PDBsum" id="5NP6"/>
<dbReference type="PDBsum" id="5NWY"/>
<dbReference type="PDBsum" id="5O2R"/>
<dbReference type="PDBsum" id="5U4I"/>
<dbReference type="PDBsum" id="5U9F"/>
<dbReference type="PDBsum" id="5U9G"/>
<dbReference type="PDBsum" id="5UYK"/>
<dbReference type="PDBsum" id="5UYL"/>
<dbReference type="PDBsum" id="5UYM"/>
<dbReference type="PDBsum" id="5UYN"/>
<dbReference type="PDBsum" id="5UYP"/>
<dbReference type="PDBsum" id="5UYQ"/>
<dbReference type="PDBsum" id="5UZ4"/>
<dbReference type="PDBsum" id="5WDT"/>
<dbReference type="PDBsum" id="5WE4"/>
<dbReference type="PDBsum" id="5WE6"/>
<dbReference type="PDBsum" id="5WF0"/>
<dbReference type="PDBsum" id="5WFK"/>
<dbReference type="PDBsum" id="5WFS"/>
<dbReference type="PDBsum" id="6AWB"/>
<dbReference type="PDBsum" id="6AWC"/>
<dbReference type="PDBsum" id="6AWD"/>
<dbReference type="PDBsum" id="6BU8"/>
<dbReference type="PDBsum" id="6BY1"/>
<dbReference type="PDBsum" id="6C4I"/>
<dbReference type="PDBsum" id="6DNC"/>
<dbReference type="PDBsum" id="6ENF"/>
<dbReference type="PDBsum" id="6ENJ"/>
<dbReference type="PDBsum" id="6ENU"/>
<dbReference type="PDBsum" id="6GWT"/>
<dbReference type="PDBsum" id="6GXM"/>
<dbReference type="PDBsum" id="6GXN"/>
<dbReference type="PDBsum" id="6GXO"/>
<dbReference type="PDBsum" id="6GXP"/>
<dbReference type="PDBsum" id="6H4N"/>
<dbReference type="PDBsum" id="6H58"/>
<dbReference type="PDBsum" id="6HRM"/>
<dbReference type="PDBsum" id="6I7V"/>
<dbReference type="PDBsum" id="6O7K"/>
<dbReference type="PDBsum" id="6O9J"/>
<dbReference type="PDBsum" id="6O9K"/>
<dbReference type="PDBsum" id="6OFX"/>
<dbReference type="PDBsum" id="6OG7"/>
<dbReference type="PDBsum" id="6OGF"/>
<dbReference type="PDBsum" id="6OGG"/>
<dbReference type="PDBsum" id="6OGI"/>
<dbReference type="PDBsum" id="6OM6"/>
<dbReference type="PDBsum" id="6ORE"/>
<dbReference type="PDBsum" id="6ORL"/>
<dbReference type="PDBsum" id="6OSK"/>
<dbReference type="PDBsum" id="6OSQ"/>
<dbReference type="PDBsum" id="6OST"/>
<dbReference type="PDBsum" id="6OT3"/>
<dbReference type="PDBsum" id="6OUO"/>
<dbReference type="PDBsum" id="6Q98"/>
<dbReference type="PDBsum" id="6Q9A"/>
<dbReference type="PDBsum" id="6SZS"/>
<dbReference type="PDBsum" id="6TBV"/>
<dbReference type="PDBsum" id="6TC3"/>
<dbReference type="PDBsum" id="6VU3"/>
<dbReference type="PDBsum" id="6VWL"/>
<dbReference type="PDBsum" id="6VWM"/>
<dbReference type="PDBsum" id="6VWN"/>
<dbReference type="PDBsum" id="6VYQ"/>
<dbReference type="PDBsum" id="6VYR"/>
<dbReference type="PDBsum" id="6VYS"/>
<dbReference type="PDBsum" id="6VYT"/>
<dbReference type="PDBsum" id="6VYU"/>
<dbReference type="PDBsum" id="6VYW"/>
<dbReference type="PDBsum" id="6VYX"/>
<dbReference type="PDBsum" id="6VYY"/>
<dbReference type="PDBsum" id="6VYZ"/>
<dbReference type="PDBsum" id="6VZ2"/>
<dbReference type="PDBsum" id="6VZ3"/>
<dbReference type="PDBsum" id="6VZ5"/>
<dbReference type="PDBsum" id="6VZ7"/>
<dbReference type="PDBsum" id="6VZJ"/>
<dbReference type="PDBsum" id="6W6K"/>
<dbReference type="PDBsum" id="6W77"/>
<dbReference type="PDBsum" id="6W7M"/>
<dbReference type="PDBsum" id="6W7N"/>
<dbReference type="PDBsum" id="6WD0"/>
<dbReference type="PDBsum" id="6WD1"/>
<dbReference type="PDBsum" id="6WD2"/>
<dbReference type="PDBsum" id="6WD3"/>
<dbReference type="PDBsum" id="6WD4"/>
<dbReference type="PDBsum" id="6WD5"/>
<dbReference type="PDBsum" id="6WD6"/>
<dbReference type="PDBsum" id="6WD7"/>
<dbReference type="PDBsum" id="6WD8"/>
<dbReference type="PDBsum" id="6WD9"/>
<dbReference type="PDBsum" id="6WDA"/>
<dbReference type="PDBsum" id="6WDB"/>
<dbReference type="PDBsum" id="6WDC"/>
<dbReference type="PDBsum" id="6WDD"/>
<dbReference type="PDBsum" id="6WDE"/>
<dbReference type="PDBsum" id="6WDF"/>
<dbReference type="PDBsum" id="6WDG"/>
<dbReference type="PDBsum" id="6WDH"/>
<dbReference type="PDBsum" id="6WDI"/>
<dbReference type="PDBsum" id="6WDJ"/>
<dbReference type="PDBsum" id="6WDK"/>
<dbReference type="PDBsum" id="6WDL"/>
<dbReference type="PDBsum" id="6WDM"/>
<dbReference type="PDBsum" id="6WNV"/>
<dbReference type="PDBsum" id="6WNW"/>
<dbReference type="PDBsum" id="6X6T"/>
<dbReference type="PDBsum" id="6X7F"/>
<dbReference type="PDBsum" id="6X7K"/>
<dbReference type="PDBsum" id="6X9Q"/>
<dbReference type="PDBsum" id="6XDQ"/>
<dbReference type="PDBsum" id="6XDR"/>
<dbReference type="PDBsum" id="6XE0"/>
<dbReference type="PDBsum" id="6XGF"/>
<dbReference type="PDBsum" id="6XII"/>
<dbReference type="PDBsum" id="6XIJ"/>
<dbReference type="PDBsum" id="6XZA"/>
<dbReference type="PDBsum" id="6XZB"/>
<dbReference type="PDBsum" id="6Y69"/>
<dbReference type="PDBsum" id="6ZTJ"/>
<dbReference type="PDBsum" id="6ZTL"/>
<dbReference type="PDBsum" id="6ZTM"/>
<dbReference type="PDBsum" id="6ZTN"/>
<dbReference type="PDBsum" id="6ZTO"/>
<dbReference type="PDBsum" id="6ZTP"/>
<dbReference type="PDBsum" id="6ZU1"/>
<dbReference type="PDBsum" id="7ABZ"/>
<dbReference type="PDBsum" id="7AC7"/>
<dbReference type="PDBsum" id="7ACJ"/>
<dbReference type="PDBsum" id="7ACR"/>
<dbReference type="PDBsum" id="7AF3"/>
<dbReference type="PDBsum" id="7AF5"/>
<dbReference type="PDBsum" id="7AF8"/>
<dbReference type="PDBsum" id="7AFA"/>
<dbReference type="PDBsum" id="7AFD"/>
<dbReference type="PDBsum" id="7AFH"/>
<dbReference type="PDBsum" id="7AFK"/>
<dbReference type="PDBsum" id="7AFN"/>
<dbReference type="PDBsum" id="7B5K"/>
<dbReference type="PDBsum" id="7BOE"/>
<dbReference type="PDBsum" id="7BOH"/>
<dbReference type="PDBsum" id="7D6Z"/>
<dbReference type="PDBsum" id="7D80"/>
<dbReference type="PDBsum" id="7JSS"/>
<dbReference type="PDBsum" id="7JSW"/>
<dbReference type="PDBsum" id="7JSZ"/>
<dbReference type="PDBsum" id="7JT1"/>
<dbReference type="PDBsum" id="7JT2"/>
<dbReference type="PDBsum" id="7JT3"/>
<dbReference type="PDBsum" id="7K00"/>
<dbReference type="PDBsum" id="7K50"/>
<dbReference type="PDBsum" id="7K51"/>
<dbReference type="PDBsum" id="7K52"/>
<dbReference type="PDBsum" id="7K53"/>
<dbReference type="PDBsum" id="7K54"/>
<dbReference type="PDBsum" id="7K55"/>
<dbReference type="PDBsum" id="7LV0"/>
<dbReference type="PDBsum" id="7M5D"/>
<dbReference type="PDBsum" id="7N1P"/>
<dbReference type="PDBsum" id="7N2C"/>
<dbReference type="PDBsum" id="7N2U"/>
<dbReference type="PDBsum" id="7N2V"/>
<dbReference type="PDBsum" id="7N30"/>
<dbReference type="PDBsum" id="7N31"/>
<dbReference type="PDBsum" id="7NAR"/>
<dbReference type="PDBsum" id="7NAT"/>
<dbReference type="PDBsum" id="7NAU"/>
<dbReference type="PDBsum" id="7NAV"/>
<dbReference type="PDBsum" id="7NAX"/>
<dbReference type="PDBsum" id="7NBU"/>
<dbReference type="PDBsum" id="7O19"/>
<dbReference type="PDBsum" id="7O1A"/>
<dbReference type="PDBsum" id="7O1C"/>
<dbReference type="PDBsum" id="7OE0"/>
<dbReference type="PDBsum" id="7OE1"/>
<dbReference type="PDBsum" id="7OIZ"/>
<dbReference type="PDBsum" id="7OJ0"/>
<dbReference type="PDBsum" id="7P3K"/>
<dbReference type="PDBsum" id="7PJU"/>
<dbReference type="PDBsum" id="7PJV"/>
<dbReference type="PDBsum" id="7PJY"/>
<dbReference type="PDBsum" id="7QG8"/>
<dbReference type="PDBsum" id="7QGH"/>
<dbReference type="PDBsum" id="7QGN"/>
<dbReference type="PDBsum" id="7QGR"/>
<dbReference type="PDBsum" id="7S1G"/>
<dbReference type="PDBsum" id="7S1H"/>
<dbReference type="PDBsum" id="7S1I"/>
<dbReference type="PDBsum" id="7S1J"/>
<dbReference type="PDBsum" id="7S1K"/>
<dbReference type="PDBsum" id="7SA4"/>
<dbReference type="PDBsum" id="7SS9"/>
<dbReference type="PDBsum" id="7SSD"/>
<dbReference type="PDBsum" id="7SSL"/>
<dbReference type="PDBsum" id="7SSN"/>
<dbReference type="PDBsum" id="7SSO"/>
<dbReference type="PDBsum" id="7SSW"/>
<dbReference type="PDBsum" id="7ST2"/>
<dbReference type="PDBsum" id="7ST6"/>
<dbReference type="PDBsum" id="7ST7"/>
<dbReference type="PDBsum" id="7TOS"/>
<dbReference type="PDBsum" id="7UG7"/>
<dbReference type="PDBsum" id="7UPH"/>
<dbReference type="PDBsum" id="7Y7C"/>
<dbReference type="PDBsum" id="7Y7D"/>
<dbReference type="PDBsum" id="7Y7E"/>
<dbReference type="PDBsum" id="7Y7F"/>
<dbReference type="PDBsum" id="7Y7G"/>
<dbReference type="PDBsum" id="7Y7H"/>
<dbReference type="PDBsum" id="7ZTA"/>
<dbReference type="PDBsum" id="8A3L"/>
<dbReference type="PDBsum" id="8AKN"/>
<dbReference type="PDBsum" id="8AM9"/>
<dbReference type="PDBsum" id="8AYE"/>
<dbReference type="PDBsum" id="8B0X"/>
<dbReference type="PDBsum" id="8B7Y"/>
<dbReference type="PDBsum" id="8BF7"/>
<dbReference type="PDBsum" id="8BGE"/>
<dbReference type="PDBsum" id="8BGH"/>
<dbReference type="PDBsum" id="8BH4"/>
<dbReference type="PDBsum" id="8BHJ"/>
<dbReference type="PDBsum" id="8BHL"/>
<dbReference type="PDBsum" id="8BHN"/>
<dbReference type="PDBsum" id="8BHP"/>
<dbReference type="PDBsum" id="8BIL"/>
<dbReference type="PDBsum" id="8BIM"/>
<dbReference type="PDBsum" id="8CA7"/>
<dbReference type="PDBsum" id="8CAZ"/>
<dbReference type="PDBsum" id="8CF1"/>
<dbReference type="PDBsum" id="8CF8"/>
<dbReference type="PDBsum" id="8CGI"/>
<dbReference type="PDBsum" id="8EIU"/>
<dbReference type="PDBsum" id="8EKC"/>
<dbReference type="PDBsum" id="8EMM"/>
<dbReference type="PDBsum" id="8EYQ"/>
<dbReference type="PDBsum" id="8EYT"/>
<dbReference type="PDBsum" id="8FIZ"/>
<dbReference type="PDBsum" id="8FTO"/>
<dbReference type="PDBsum" id="8FZD"/>
<dbReference type="PDBsum" id="8FZE"/>
<dbReference type="PDBsum" id="8FZF"/>
<dbReference type="PDBsum" id="8FZG"/>
<dbReference type="PDBsum" id="8FZH"/>
<dbReference type="PDBsum" id="8FZI"/>
<dbReference type="PDBsum" id="8FZJ"/>
<dbReference type="PDBsum" id="8G2U"/>
<dbReference type="PDBsum" id="8G31"/>
<dbReference type="PDBsum" id="8G34"/>
<dbReference type="PDBsum" id="8G38"/>
<dbReference type="PDBsum" id="8G6W"/>
<dbReference type="PDBsum" id="8G7P"/>
<dbReference type="PDBsum" id="8G7Q"/>
<dbReference type="PDBsum" id="8G7R"/>
<dbReference type="PDBsum" id="8G7S"/>
<dbReference type="PDBsum" id="8HSP"/>
<dbReference type="PDBsum" id="8HTZ"/>
<dbReference type="PDBsum" id="8HU1"/>
<dbReference type="PDBsum" id="8IFB"/>
<dbReference type="PDBsum" id="8IFC"/>
<dbReference type="PDBsum" id="8JSG"/>
<dbReference type="PDBsum" id="8K3O"/>
<dbReference type="PDBsum" id="8K4E"/>
<dbReference type="PDBsum" id="8P16"/>
<dbReference type="PDBsum" id="8P17"/>
<dbReference type="PDBsum" id="8P18"/>
<dbReference type="PDBsum" id="8PEG"/>
<dbReference type="PDBsum" id="8PHJ"/>
<dbReference type="PDBsum" id="8PKL"/>
<dbReference type="PDBsum" id="8PVA"/>
<dbReference type="PDBsum" id="8Q4F"/>
<dbReference type="PDBsum" id="8QBT"/>
<dbReference type="PDBsum" id="8QK7"/>
<dbReference type="PDBsum" id="8QOA"/>
<dbReference type="PDBsum" id="8R3V"/>
<dbReference type="PDBsum" id="8R6C"/>
<dbReference type="PDBsum" id="8R8M"/>
<dbReference type="PDBsum" id="8RCL"/>
<dbReference type="PDBsum" id="8RCM"/>
<dbReference type="PDBsum" id="8RCS"/>
<dbReference type="PDBsum" id="8RCT"/>
<dbReference type="PDBsum" id="8SYL"/>
<dbReference type="PDBsum" id="8T5D"/>
<dbReference type="PDBsum" id="8T5H"/>
<dbReference type="PDBsum" id="8UPO"/>
<dbReference type="PDBsum" id="8UPR"/>
<dbReference type="PDBsum" id="8UQL"/>
<dbReference type="PDBsum" id="8UQM"/>
<dbReference type="PDBsum" id="8UQP"/>
<dbReference type="PDBsum" id="8UR0"/>
<dbReference type="PDBsum" id="8URH"/>
<dbReference type="PDBsum" id="8URI"/>
<dbReference type="PDBsum" id="8URX"/>
<dbReference type="PDBsum" id="8URY"/>
<dbReference type="PDBsum" id="8VS9"/>
<dbReference type="PDBsum" id="8VSA"/>
<dbReference type="PDBsum" id="8YUO"/>
<dbReference type="PDBsum" id="8YUP"/>
<dbReference type="PDBsum" id="8YUQ"/>
<dbReference type="PDBsum" id="8YUR"/>
<dbReference type="PDBsum" id="8YUS"/>
<dbReference type="PDBsum" id="9DUK"/>
<dbReference type="PDBsum" id="9DUL"/>
<dbReference type="PDBsum" id="9FBV"/>
<dbReference type="PDBsum" id="9GFT"/>
<dbReference type="PDBsum" id="9GGR"/>
<dbReference type="PDBsum" id="9GUP"/>
<dbReference type="PDBsum" id="9GUQ"/>
<dbReference type="PDBsum" id="9GUS"/>
<dbReference type="PDBsum" id="9GUT"/>
<dbReference type="PDBsum" id="9GUU"/>
<dbReference type="PDBsum" id="9GUV"/>
<dbReference type="PDBsum" id="9GUW"/>
<dbReference type="PDBsum" id="9GUX"/>
<dbReference type="PDBsum" id="9MOR"/>
<dbReference type="PDBsum" id="9MQ4"/>
<dbReference type="EMDB" id="EMD-0076"/>
<dbReference type="EMDB" id="EMD-0080"/>
<dbReference type="EMDB" id="EMD-0081"/>
<dbReference type="EMDB" id="EMD-0082"/>
<dbReference type="EMDB" id="EMD-0083"/>
<dbReference type="EMDB" id="EMD-0137"/>
<dbReference type="EMDB" id="EMD-0139"/>
<dbReference type="EMDB" id="EMD-0261"/>
<dbReference type="EMDB" id="EMD-10353"/>
<dbReference type="EMDB" id="EMD-10453"/>
<dbReference type="EMDB" id="EMD-10458"/>
<dbReference type="EMDB" id="EMD-10656"/>
<dbReference type="EMDB" id="EMD-10657"/>
<dbReference type="EMDB" id="EMD-10705"/>
<dbReference type="EMDB" id="EMD-11419"/>
<dbReference type="EMDB" id="EMD-11710"/>
<dbReference type="EMDB" id="EMD-11713"/>
<dbReference type="EMDB" id="EMD-11717"/>
<dbReference type="EMDB" id="EMD-11718"/>
<dbReference type="EMDB" id="EMD-12035"/>
<dbReference type="EMDB" id="EMD-12240"/>
<dbReference type="EMDB" id="EMD-12243"/>
<dbReference type="EMDB" id="EMD-12245"/>
<dbReference type="EMDB" id="EMD-12247"/>
<dbReference type="EMDB" id="EMD-12248"/>
<dbReference type="EMDB" id="EMD-12249"/>
<dbReference type="EMDB" id="EMD-12261"/>
<dbReference type="EMDB" id="EMD-12693"/>
<dbReference type="EMDB" id="EMD-12694"/>
<dbReference type="EMDB" id="EMD-12695"/>
<dbReference type="EMDB" id="EMD-12936"/>
<dbReference type="EMDB" id="EMD-12937"/>
<dbReference type="EMDB" id="EMD-13180"/>
<dbReference type="EMDB" id="EMD-13461"/>
<dbReference type="EMDB" id="EMD-13464"/>
<dbReference type="EMDB" id="EMD-13952"/>
<dbReference type="EMDB" id="EMD-13955"/>
<dbReference type="EMDB" id="EMD-14956"/>
<dbReference type="EMDB" id="EMD-15116"/>
<dbReference type="EMDB" id="EMD-15712"/>
<dbReference type="EMDB" id="EMD-15793"/>
<dbReference type="EMDB" id="EMD-15905"/>
<dbReference type="EMDB" id="EMD-16015"/>
<dbReference type="EMDB" id="EMD-16029"/>
<dbReference type="EMDB" id="EMD-16031"/>
<dbReference type="EMDB" id="EMD-16047"/>
<dbReference type="EMDB" id="EMD-16057"/>
<dbReference type="EMDB" id="EMD-16059"/>
<dbReference type="EMDB" id="EMD-16062"/>
<dbReference type="EMDB" id="EMD-16065"/>
<dbReference type="EMDB" id="EMD-16081"/>
<dbReference type="EMDB" id="EMD-16082"/>
<dbReference type="EMDB" id="EMD-16520"/>
<dbReference type="EMDB" id="EMD-16536"/>
<dbReference type="EMDB" id="EMD-16615"/>
<dbReference type="EMDB" id="EMD-16620"/>
<dbReference type="EMDB" id="EMD-16644"/>
<dbReference type="EMDB" id="EMD-17346"/>
<dbReference type="EMDB" id="EMD-17347"/>
<dbReference type="EMDB" id="EMD-17348"/>
<dbReference type="EMDB" id="EMD-17631"/>
<dbReference type="EMDB" id="EMD-17667"/>
<dbReference type="EMDB" id="EMD-17743"/>
<dbReference type="EMDB" id="EMD-17959"/>
<dbReference type="EMDB" id="EMD-18145"/>
<dbReference type="EMDB" id="EMD-18320"/>
<dbReference type="EMDB" id="EMD-18458"/>
<dbReference type="EMDB" id="EMD-18534"/>
<dbReference type="EMDB" id="EMD-18875"/>
<dbReference type="EMDB" id="EMD-18950"/>
<dbReference type="EMDB" id="EMD-19004"/>
<dbReference type="EMDB" id="EMD-19054"/>
<dbReference type="EMDB" id="EMD-19055"/>
<dbReference type="EMDB" id="EMD-19058"/>
<dbReference type="EMDB" id="EMD-19059"/>
<dbReference type="EMDB" id="EMD-20048"/>
<dbReference type="EMDB" id="EMD-20052"/>
<dbReference type="EMDB" id="EMD-21420"/>
<dbReference type="EMDB" id="EMD-21421"/>
<dbReference type="EMDB" id="EMD-21422"/>
<dbReference type="EMDB" id="EMD-21558"/>
<dbReference type="EMDB" id="EMD-21569"/>
<dbReference type="EMDB" id="EMD-21571"/>
<dbReference type="EMDB" id="EMD-21572"/>
<dbReference type="EMDB" id="EMD-21625"/>
<dbReference type="EMDB" id="EMD-21630"/>
<dbReference type="EMDB" id="EMD-21631"/>
<dbReference type="EMDB" id="EMD-21632"/>
<dbReference type="EMDB" id="EMD-21633"/>
<dbReference type="EMDB" id="EMD-21634"/>
<dbReference type="EMDB" id="EMD-21635"/>
<dbReference type="EMDB" id="EMD-21636"/>
<dbReference type="EMDB" id="EMD-21637"/>
<dbReference type="EMDB" id="EMD-21638"/>
<dbReference type="EMDB" id="EMD-21639"/>
<dbReference type="EMDB" id="EMD-21640"/>
<dbReference type="EMDB" id="EMD-21641"/>
<dbReference type="EMDB" id="EMD-21857"/>
<dbReference type="EMDB" id="EMD-21858"/>
<dbReference type="EMDB" id="EMD-22143"/>
<dbReference type="EMDB" id="EMD-22459"/>
<dbReference type="EMDB" id="EMD-22461"/>
<dbReference type="EMDB" id="EMD-22464"/>
<dbReference type="EMDB" id="EMD-22466"/>
<dbReference type="EMDB" id="EMD-22469"/>
<dbReference type="EMDB" id="EMD-22472"/>
<dbReference type="EMDB" id="EMD-22669"/>
<dbReference type="EMDB" id="EMD-22670"/>
<dbReference type="EMDB" id="EMD-22671"/>
<dbReference type="EMDB" id="EMD-22672"/>
<dbReference type="EMDB" id="EMD-22673"/>
<dbReference type="EMDB" id="EMD-22674"/>
<dbReference type="EMDB" id="EMD-23528"/>
<dbReference type="EMDB" id="EMD-24120"/>
<dbReference type="EMDB" id="EMD-24132"/>
<dbReference type="EMDB" id="EMD-24133"/>
<dbReference type="EMDB" id="EMD-24134"/>
<dbReference type="EMDB" id="EMD-24135"/>
<dbReference type="EMDB" id="EMD-24136"/>
<dbReference type="EMDB" id="EMD-24803"/>
<dbReference type="EMDB" id="EMD-25405"/>
<dbReference type="EMDB" id="EMD-25407"/>
<dbReference type="EMDB" id="EMD-25409"/>
<dbReference type="EMDB" id="EMD-25410"/>
<dbReference type="EMDB" id="EMD-25411"/>
<dbReference type="EMDB" id="EMD-25415"/>
<dbReference type="EMDB" id="EMD-25418"/>
<dbReference type="EMDB" id="EMD-25420"/>
<dbReference type="EMDB" id="EMD-25421"/>
<dbReference type="EMDB" id="EMD-30598"/>
<dbReference type="EMDB" id="EMD-30611"/>
<dbReference type="EMDB" id="EMD-33660"/>
<dbReference type="EMDB" id="EMD-33661"/>
<dbReference type="EMDB" id="EMD-33662"/>
<dbReference type="EMDB" id="EMD-33663"/>
<dbReference type="EMDB" id="EMD-33664"/>
<dbReference type="EMDB" id="EMD-33665"/>
<dbReference type="EMDB" id="EMD-3489"/>
<dbReference type="EMDB" id="EMD-3490"/>
<dbReference type="EMDB" id="EMD-3492"/>
<dbReference type="EMDB" id="EMD-3493"/>
<dbReference type="EMDB" id="EMD-3494"/>
<dbReference type="EMDB" id="EMD-3495"/>
<dbReference type="EMDB" id="EMD-35001"/>
<dbReference type="EMDB" id="EMD-35020"/>
<dbReference type="EMDB" id="EMD-35022"/>
<dbReference type="EMDB" id="EMD-3508"/>
<dbReference type="EMDB" id="EMD-35411"/>
<dbReference type="EMDB" id="EMD-35412"/>
<dbReference type="EMDB" id="EMD-3580"/>
<dbReference type="EMDB" id="EMD-3661"/>
<dbReference type="EMDB" id="EMD-36619"/>
<dbReference type="EMDB" id="EMD-3662"/>
<dbReference type="EMDB" id="EMD-3663"/>
<dbReference type="EMDB" id="EMD-36854"/>
<dbReference type="EMDB" id="EMD-36883"/>
<dbReference type="EMDB" id="EMD-3713"/>
<dbReference type="EMDB" id="EMD-3730"/>
<dbReference type="EMDB" id="EMD-3898"/>
<dbReference type="EMDB" id="EMD-3899"/>
<dbReference type="EMDB" id="EMD-3903"/>
<dbReference type="EMDB" id="EMD-39577"/>
<dbReference type="EMDB" id="EMD-39578"/>
<dbReference type="EMDB" id="EMD-39579"/>
<dbReference type="EMDB" id="EMD-39580"/>
<dbReference type="EMDB" id="EMD-39581"/>
<dbReference type="EMDB" id="EMD-4001"/>
<dbReference type="EMDB" id="EMD-4121"/>
<dbReference type="EMDB" id="EMD-4122"/>
<dbReference type="EMDB" id="EMD-4123"/>
<dbReference type="EMDB" id="EMD-4124"/>
<dbReference type="EMDB" id="EMD-4125"/>
<dbReference type="EMDB" id="EMD-4126"/>
<dbReference type="EMDB" id="EMD-4477"/>
<dbReference type="EMDB" id="EMD-4478"/>
<dbReference type="EMDB" id="EMD-50296"/>
<dbReference type="EMDB" id="EMD-51318"/>
<dbReference type="EMDB" id="EMD-51340"/>
<dbReference type="EMDB" id="EMD-51615"/>
<dbReference type="EMDB" id="EMD-51616"/>
<dbReference type="EMDB" id="EMD-51618"/>
<dbReference type="EMDB" id="EMD-51619"/>
<dbReference type="EMDB" id="EMD-51620"/>
<dbReference type="EMDB" id="EMD-51621"/>
<dbReference type="EMDB" id="EMD-51622"/>
<dbReference type="EMDB" id="EMD-51623"/>
<dbReference type="EMDB" id="EMD-6667"/>
<dbReference type="EMDB" id="EMD-7289"/>
<dbReference type="EMDB" id="EMD-7341"/>
<dbReference type="EMDB" id="EMD-8107"/>
<dbReference type="EMDB" id="EMD-8175"/>
<dbReference type="EMDB" id="EMD-8176"/>
<dbReference type="EMDB" id="EMD-8237"/>
<dbReference type="EMDB" id="EMD-8238"/>
<dbReference type="EMDB" id="EMD-8279"/>
<dbReference type="EMDB" id="EMD-8280"/>
<dbReference type="EMDB" id="EMD-8281"/>
<dbReference type="EMDB" id="EMD-8282"/>
<dbReference type="EMDB" id="EMD-8505"/>
<dbReference type="EMDB" id="EMD-8615"/>
<dbReference type="EMDB" id="EMD-8616"/>
<dbReference type="EMDB" id="EMD-8617"/>
<dbReference type="EMDB" id="EMD-8618"/>
<dbReference type="EMDB" id="EMD-8619"/>
<dbReference type="EMDB" id="EMD-8620"/>
<dbReference type="EMDB" id="EMD-8813"/>
<dbReference type="EMDB" id="EMD-8814"/>
<dbReference type="EMDB" id="EMD-8815"/>
<dbReference type="EMDB" id="EMD-8828"/>
<dbReference type="SMR" id="P0A7X3"/>
<dbReference type="BioGRID" id="4262446">
    <property type="interactions" value="154"/>
</dbReference>
<dbReference type="BioGRID" id="853248">
    <property type="interactions" value="4"/>
</dbReference>
<dbReference type="ComplexPortal" id="CPX-3802">
    <property type="entry name" value="30S small ribosomal subunit"/>
</dbReference>
<dbReference type="DIP" id="DIP-35799N"/>
<dbReference type="FunCoup" id="P0A7X3">
    <property type="interactions" value="1279"/>
</dbReference>
<dbReference type="IntAct" id="P0A7X3">
    <property type="interactions" value="166"/>
</dbReference>
<dbReference type="STRING" id="511145.b3230"/>
<dbReference type="DrugBank" id="DB00453">
    <property type="generic name" value="Clomocycline"/>
</dbReference>
<dbReference type="DrugBank" id="DB01017">
    <property type="generic name" value="Minocycline"/>
</dbReference>
<dbReference type="DrugBank" id="DB00595">
    <property type="generic name" value="Oxytetracycline"/>
</dbReference>
<dbReference type="DrugBank" id="DB01301">
    <property type="generic name" value="Rolitetracycline"/>
</dbReference>
<dbReference type="DrugBank" id="DB00560">
    <property type="generic name" value="Tigecycline"/>
</dbReference>
<dbReference type="DrugCentral" id="P0A7X3"/>
<dbReference type="jPOST" id="P0A7X3"/>
<dbReference type="PaxDb" id="511145-b3230"/>
<dbReference type="EnsemblBacteria" id="AAC76262">
    <property type="protein sequence ID" value="AAC76262"/>
    <property type="gene ID" value="b3230"/>
</dbReference>
<dbReference type="GeneID" id="949000"/>
<dbReference type="GeneID" id="98390344"/>
<dbReference type="KEGG" id="ecj:JW3199"/>
<dbReference type="KEGG" id="eco:b3230"/>
<dbReference type="KEGG" id="ecoc:C3026_17575"/>
<dbReference type="PATRIC" id="fig|1411691.4.peg.3498"/>
<dbReference type="EchoBASE" id="EB0901"/>
<dbReference type="eggNOG" id="COG0103">
    <property type="taxonomic scope" value="Bacteria"/>
</dbReference>
<dbReference type="HOGENOM" id="CLU_046483_2_1_6"/>
<dbReference type="InParanoid" id="P0A7X3"/>
<dbReference type="OMA" id="KFQFSKR"/>
<dbReference type="OrthoDB" id="9803965at2"/>
<dbReference type="PhylomeDB" id="P0A7X3"/>
<dbReference type="BioCyc" id="EcoCyc:EG10908-MONOMER"/>
<dbReference type="BioCyc" id="MetaCyc:EG10908-MONOMER"/>
<dbReference type="EvolutionaryTrace" id="P0A7X3"/>
<dbReference type="PRO" id="PR:P0A7X3"/>
<dbReference type="Proteomes" id="UP000000625">
    <property type="component" value="Chromosome"/>
</dbReference>
<dbReference type="GO" id="GO:0005737">
    <property type="term" value="C:cytoplasm"/>
    <property type="evidence" value="ECO:0000314"/>
    <property type="project" value="ComplexPortal"/>
</dbReference>
<dbReference type="GO" id="GO:0005829">
    <property type="term" value="C:cytosol"/>
    <property type="evidence" value="ECO:0000314"/>
    <property type="project" value="EcoCyc"/>
</dbReference>
<dbReference type="GO" id="GO:0022627">
    <property type="term" value="C:cytosolic small ribosomal subunit"/>
    <property type="evidence" value="ECO:0000314"/>
    <property type="project" value="EcoCyc"/>
</dbReference>
<dbReference type="GO" id="GO:0003723">
    <property type="term" value="F:RNA binding"/>
    <property type="evidence" value="ECO:0000318"/>
    <property type="project" value="GO_Central"/>
</dbReference>
<dbReference type="GO" id="GO:0003735">
    <property type="term" value="F:structural constituent of ribosome"/>
    <property type="evidence" value="ECO:0000314"/>
    <property type="project" value="CAFA"/>
</dbReference>
<dbReference type="GO" id="GO:0000049">
    <property type="term" value="F:tRNA binding"/>
    <property type="evidence" value="ECO:0007669"/>
    <property type="project" value="UniProtKB-KW"/>
</dbReference>
<dbReference type="GO" id="GO:0002181">
    <property type="term" value="P:cytoplasmic translation"/>
    <property type="evidence" value="ECO:0000303"/>
    <property type="project" value="ComplexPortal"/>
</dbReference>
<dbReference type="FunFam" id="3.30.230.10:FF:000001">
    <property type="entry name" value="30S ribosomal protein S9"/>
    <property type="match status" value="1"/>
</dbReference>
<dbReference type="Gene3D" id="3.30.230.10">
    <property type="match status" value="1"/>
</dbReference>
<dbReference type="HAMAP" id="MF_00532_B">
    <property type="entry name" value="Ribosomal_uS9_B"/>
    <property type="match status" value="1"/>
</dbReference>
<dbReference type="InterPro" id="IPR020568">
    <property type="entry name" value="Ribosomal_Su5_D2-typ_SF"/>
</dbReference>
<dbReference type="InterPro" id="IPR000754">
    <property type="entry name" value="Ribosomal_uS9"/>
</dbReference>
<dbReference type="InterPro" id="IPR023035">
    <property type="entry name" value="Ribosomal_uS9_bac/plastid"/>
</dbReference>
<dbReference type="InterPro" id="IPR020574">
    <property type="entry name" value="Ribosomal_uS9_CS"/>
</dbReference>
<dbReference type="InterPro" id="IPR014721">
    <property type="entry name" value="Ribsml_uS5_D2-typ_fold_subgr"/>
</dbReference>
<dbReference type="NCBIfam" id="NF001099">
    <property type="entry name" value="PRK00132.1"/>
    <property type="match status" value="1"/>
</dbReference>
<dbReference type="PANTHER" id="PTHR21569">
    <property type="entry name" value="RIBOSOMAL PROTEIN S9"/>
    <property type="match status" value="1"/>
</dbReference>
<dbReference type="PANTHER" id="PTHR21569:SF1">
    <property type="entry name" value="SMALL RIBOSOMAL SUBUNIT PROTEIN US9M"/>
    <property type="match status" value="1"/>
</dbReference>
<dbReference type="Pfam" id="PF00380">
    <property type="entry name" value="Ribosomal_S9"/>
    <property type="match status" value="1"/>
</dbReference>
<dbReference type="SUPFAM" id="SSF54211">
    <property type="entry name" value="Ribosomal protein S5 domain 2-like"/>
    <property type="match status" value="1"/>
</dbReference>
<dbReference type="PROSITE" id="PS00360">
    <property type="entry name" value="RIBOSOMAL_S9"/>
    <property type="match status" value="1"/>
</dbReference>
<accession>P0A7X3</accession>
<accession>P02363</accession>
<accession>Q2M8Y3</accession>
<organism>
    <name type="scientific">Escherichia coli (strain K12)</name>
    <dbReference type="NCBI Taxonomy" id="83333"/>
    <lineage>
        <taxon>Bacteria</taxon>
        <taxon>Pseudomonadati</taxon>
        <taxon>Pseudomonadota</taxon>
        <taxon>Gammaproteobacteria</taxon>
        <taxon>Enterobacterales</taxon>
        <taxon>Enterobacteriaceae</taxon>
        <taxon>Escherichia</taxon>
    </lineage>
</organism>
<reference key="1">
    <citation type="journal article" date="1985" name="Mol. Gen. Genet.">
        <title>Cloning and nucleotide sequencing of the genes for ribosomal proteins S9 (rpsI) and L13 (rplM) of Escherichia coli.</title>
        <authorList>
            <person name="Isono S."/>
            <person name="Thamm S."/>
            <person name="Kitakawa M."/>
            <person name="Isono K."/>
        </authorList>
    </citation>
    <scope>NUCLEOTIDE SEQUENCE [GENOMIC DNA]</scope>
</reference>
<reference key="2">
    <citation type="journal article" date="1997" name="Science">
        <title>The complete genome sequence of Escherichia coli K-12.</title>
        <authorList>
            <person name="Blattner F.R."/>
            <person name="Plunkett G. III"/>
            <person name="Bloch C.A."/>
            <person name="Perna N.T."/>
            <person name="Burland V."/>
            <person name="Riley M."/>
            <person name="Collado-Vides J."/>
            <person name="Glasner J.D."/>
            <person name="Rode C.K."/>
            <person name="Mayhew G.F."/>
            <person name="Gregor J."/>
            <person name="Davis N.W."/>
            <person name="Kirkpatrick H.A."/>
            <person name="Goeden M.A."/>
            <person name="Rose D.J."/>
            <person name="Mau B."/>
            <person name="Shao Y."/>
        </authorList>
    </citation>
    <scope>NUCLEOTIDE SEQUENCE [LARGE SCALE GENOMIC DNA]</scope>
    <source>
        <strain>K12 / MG1655 / ATCC 47076</strain>
    </source>
</reference>
<reference key="3">
    <citation type="journal article" date="2006" name="Mol. Syst. Biol.">
        <title>Highly accurate genome sequences of Escherichia coli K-12 strains MG1655 and W3110.</title>
        <authorList>
            <person name="Hayashi K."/>
            <person name="Morooka N."/>
            <person name="Yamamoto Y."/>
            <person name="Fujita K."/>
            <person name="Isono K."/>
            <person name="Choi S."/>
            <person name="Ohtsubo E."/>
            <person name="Baba T."/>
            <person name="Wanner B.L."/>
            <person name="Mori H."/>
            <person name="Horiuchi T."/>
        </authorList>
    </citation>
    <scope>NUCLEOTIDE SEQUENCE [LARGE SCALE GENOMIC DNA]</scope>
    <source>
        <strain>K12 / W3110 / ATCC 27325 / DSM 5911</strain>
    </source>
</reference>
<reference key="4">
    <citation type="journal article" date="1975" name="FEBS Lett.">
        <title>The primary structure of protein S9 from the 30S subunit of Escherichia coli ribosomes.</title>
        <authorList>
            <person name="Chen R."/>
            <person name="Wittmann-Liebold B."/>
        </authorList>
    </citation>
    <scope>PROTEIN SEQUENCE OF 2-130</scope>
    <scope>SUBUNIT</scope>
    <source>
        <strain>K</strain>
    </source>
</reference>
<reference key="5">
    <citation type="journal article" date="1995" name="EMBO J.">
        <title>Protein-rRNA binding features and their structural and functional implications in ribosomes as determined by cross-linking studies.</title>
        <authorList>
            <person name="Urlaub H."/>
            <person name="Kruft V."/>
            <person name="Bischof O."/>
            <person name="Mueller E.-C."/>
            <person name="Wittmann-Liebold B."/>
        </authorList>
    </citation>
    <scope>PROTEIN SEQUENCE OF 121-130</scope>
    <scope>SUBUNIT</scope>
    <scope>CROSS-LINKING TO RRNA</scope>
    <source>
        <strain>MRE-600</strain>
    </source>
</reference>
<reference key="6">
    <citation type="journal article" date="1973" name="Proc. Natl. Acad. Sci. U.S.A.">
        <title>Requirement of proteins S5 and S9 from 30S subunits for the ribosome-dependent GTPase activity of elongation factor G.</title>
        <authorList>
            <person name="Marsh R.C."/>
            <person name="Parmeggiani A."/>
        </authorList>
    </citation>
    <scope>INVOLVEMENT IN FORMATION OF THE EF-G/RIBOSOME COMPLEX</scope>
    <source>
        <strain>B/2</strain>
    </source>
</reference>
<reference key="7">
    <citation type="journal article" date="1995" name="Nucleic Acids Res.">
        <title>The ribosomal neighbourhood of the central fold of tRNA: cross-links from position 47 of tRNA located at the A, P or E site.</title>
        <authorList>
            <person name="Osswald M."/>
            <person name="Doering T."/>
            <person name="Brimacombe R."/>
        </authorList>
    </citation>
    <scope>CROSS-LINKING TO THE TRNA CENTRAL FOLD</scope>
    <source>
        <strain>MRE-600</strain>
    </source>
</reference>
<reference key="8">
    <citation type="journal article" date="1997" name="Electrophoresis">
        <title>Escherichia coli proteome analysis using the gene-protein database.</title>
        <authorList>
            <person name="VanBogelen R.A."/>
            <person name="Abshire K.Z."/>
            <person name="Moldover B."/>
            <person name="Olson E.R."/>
            <person name="Neidhardt F.C."/>
        </authorList>
    </citation>
    <scope>IDENTIFICATION BY 2D-GEL</scope>
</reference>
<reference key="9">
    <citation type="journal article" date="2004" name="Proc. Natl. Acad. Sci. U.S.A.">
        <title>Creating ribosomes with an all-RNA 30S subunit P site.</title>
        <authorList>
            <person name="Hoang L."/>
            <person name="Fredrick K."/>
            <person name="Noller H.F."/>
        </authorList>
    </citation>
    <scope>ROLE IN P SITE TRNA-BINDING</scope>
    <scope>SUBUNIT</scope>
    <scope>MUTAGENESIS OF 105-THR--ARG-130 AND 128-SER--ARG-130</scope>
    <source>
        <strain>CSH142</strain>
    </source>
</reference>
<reference key="10">
    <citation type="journal article" date="1999" name="Anal. Biochem.">
        <title>Observation of Escherichia coli ribosomal proteins and their posttranslational modifications by mass spectrometry.</title>
        <authorList>
            <person name="Arnold R.J."/>
            <person name="Reilly J.P."/>
        </authorList>
    </citation>
    <scope>MASS SPECTROMETRY</scope>
    <scope>SUBUNIT</scope>
    <source>
        <strain>K12 / ATCC 25404 / DSM 5698 / NCIMB 11290</strain>
    </source>
</reference>
<reference key="11">
    <citation type="journal article" date="2014" name="Curr. Opin. Struct. Biol.">
        <title>A new system for naming ribosomal proteins.</title>
        <authorList>
            <person name="Ban N."/>
            <person name="Beckmann R."/>
            <person name="Cate J.H.D."/>
            <person name="Dinman J.D."/>
            <person name="Dragon F."/>
            <person name="Ellis S.R."/>
            <person name="Lafontaine D.L.J."/>
            <person name="Lindahl L."/>
            <person name="Liljas A."/>
            <person name="Lipton J.M."/>
            <person name="McAlear M.A."/>
            <person name="Moore P.B."/>
            <person name="Noller H.F."/>
            <person name="Ortega J."/>
            <person name="Panse V.G."/>
            <person name="Ramakrishnan V."/>
            <person name="Spahn C.M.T."/>
            <person name="Steitz T.A."/>
            <person name="Tchorzewski M."/>
            <person name="Tollervey D."/>
            <person name="Warren A.J."/>
            <person name="Williamson J.R."/>
            <person name="Wilson D."/>
            <person name="Yonath A."/>
            <person name="Yusupov M."/>
        </authorList>
    </citation>
    <scope>NOMENCLATURE</scope>
</reference>
<reference key="12">
    <citation type="journal article" date="2002" name="Nat. Struct. Biol.">
        <title>All-atom homology model of the Escherichia coli 30S ribosomal subunit.</title>
        <authorList>
            <person name="Tung C.-S."/>
            <person name="Joseph S."/>
            <person name="Sanbonmatsu K.Y."/>
        </authorList>
    </citation>
    <scope>3D-STRUCTURE MODELING</scope>
    <scope>SUBUNIT</scope>
</reference>
<reference key="13">
    <citation type="journal article" date="2003" name="Cell">
        <title>Study of the structural dynamics of the E. coli 70S ribosome using real-space refinement.</title>
        <authorList>
            <person name="Gao H."/>
            <person name="Sengupta J."/>
            <person name="Valle M."/>
            <person name="Korostelev A."/>
            <person name="Eswar N."/>
            <person name="Stagg S.M."/>
            <person name="Van Roey P."/>
            <person name="Agrawal R.K."/>
            <person name="Harvey S.C."/>
            <person name="Sali A."/>
            <person name="Chapman M.S."/>
            <person name="Frank J."/>
        </authorList>
    </citation>
    <scope>STRUCTURE BY ELECTRON MICROSCOPY (11.50 ANGSTROMS)</scope>
    <scope>SUBUNIT</scope>
    <source>
        <strain>MRE-600</strain>
    </source>
</reference>
<reference key="14">
    <citation type="journal article" date="2005" name="Science">
        <title>Structures of the bacterial ribosome at 3.5 A resolution.</title>
        <authorList>
            <person name="Schuwirth B.S."/>
            <person name="Borovinskaya M.A."/>
            <person name="Hau C.W."/>
            <person name="Zhang W."/>
            <person name="Vila-Sanjurjo A."/>
            <person name="Holton J.M."/>
            <person name="Cate J.H.D."/>
        </authorList>
    </citation>
    <scope>X-RAY CRYSTALLOGRAPHY (3.46 ANGSTROMS) OF 2 DIFFERENT RIBOSOME STRUCTURES</scope>
    <scope>SUBUNIT</scope>
    <source>
        <strain>MRE-600</strain>
    </source>
</reference>
<reference key="15">
    <citation type="journal article" date="2017" name="Nature">
        <title>Mechanistic insights into the alternative translation termination by ArfA and RF2.</title>
        <authorList>
            <person name="Ma C."/>
            <person name="Kurita D."/>
            <person name="Li N."/>
            <person name="Chen Y."/>
            <person name="Himeno H."/>
            <person name="Gao N."/>
        </authorList>
    </citation>
    <scope>STRUCTURE BY ELECTRON MICROSCOPY (3.0 ANGSTROMS) OF 70S RIBOSOME IN COMPLEX WITH ARFA AND RF2</scope>
    <scope>SUBUNIT</scope>
</reference>
<reference key="16">
    <citation type="journal article" date="2017" name="Nature">
        <title>Structural basis for ArfA-RF2-mediated translation termination on mRNAs lacking stop codons.</title>
        <authorList>
            <person name="Huter P."/>
            <person name="Mueller C."/>
            <person name="Beckert B."/>
            <person name="Arenz S."/>
            <person name="Berninghausen O."/>
            <person name="Beckmann R."/>
            <person name="Wilson D.N."/>
        </authorList>
    </citation>
    <scope>STRUCTURE BY ELECTRON MICROSCOPY (3.1 ANGSTROMS) OF 70S RIBOSOME IN COMPLEX WITH ARFA AND RF2</scope>
    <scope>SUBUNIT</scope>
</reference>
<reference key="17">
    <citation type="journal article" date="2016" name="Science">
        <title>Translational termination without a stop codon.</title>
        <authorList>
            <person name="James N.R."/>
            <person name="Brown A."/>
            <person name="Gordiyenko Y."/>
            <person name="Ramakrishnan V."/>
        </authorList>
    </citation>
    <scope>STRUCTURE BY ELECTRON MICROSCOPY (2.97 ANGSTROMS) OF 70S RIBOSOME IN COMPLEX WITH ARFA AND RF2</scope>
    <scope>SUBUNIT</scope>
</reference>
<reference key="18">
    <citation type="journal article" date="2017" name="Nature">
        <title>Structural basis of co-translational quality control by ArfA and RF2 bound to ribosome.</title>
        <authorList>
            <person name="Zeng F."/>
            <person name="Chen Y."/>
            <person name="Remis J."/>
            <person name="Shekhar M."/>
            <person name="Phillips J.C."/>
            <person name="Tajkhorshid E."/>
            <person name="Jin H."/>
        </authorList>
    </citation>
    <scope>STRUCTURE BY ELECTRON MICROSCOPY (3.52 ANGSTROMS) OF 70S RIBOSOME IN COMPLEX WITH ARFA AND RF2</scope>
    <scope>SUBUNIT</scope>
</reference>